<dbReference type="EMBL" id="J05582">
    <property type="protein sequence ID" value="AAA60019.1"/>
    <property type="molecule type" value="mRNA"/>
</dbReference>
<dbReference type="EMBL" id="M32738">
    <property type="protein sequence ID" value="AAA35804.1"/>
    <property type="molecule type" value="mRNA"/>
</dbReference>
<dbReference type="EMBL" id="M32739">
    <property type="protein sequence ID" value="AAA35806.1"/>
    <property type="molecule type" value="mRNA"/>
</dbReference>
<dbReference type="EMBL" id="M34089">
    <property type="protein sequence ID" value="AAA35807.1"/>
    <property type="molecule type" value="mRNA"/>
</dbReference>
<dbReference type="EMBL" id="M34088">
    <property type="protein sequence ID" value="AAA35805.1"/>
    <property type="molecule type" value="mRNA"/>
</dbReference>
<dbReference type="EMBL" id="J05581">
    <property type="protein sequence ID" value="AAA59876.1"/>
    <property type="molecule type" value="mRNA"/>
</dbReference>
<dbReference type="EMBL" id="M61170">
    <property type="protein sequence ID" value="AAB53150.1"/>
    <property type="molecule type" value="Genomic_DNA"/>
</dbReference>
<dbReference type="EMBL" id="X52229">
    <property type="protein sequence ID" value="CAA36478.1"/>
    <property type="status" value="ALT_SEQ"/>
    <property type="molecule type" value="mRNA"/>
</dbReference>
<dbReference type="EMBL" id="X52228">
    <property type="protein sequence ID" value="CAA36477.1"/>
    <property type="status" value="ALT_SEQ"/>
    <property type="molecule type" value="mRNA"/>
</dbReference>
<dbReference type="EMBL" id="M35093">
    <property type="protein sequence ID" value="AAB59612.1"/>
    <property type="status" value="ALT_SEQ"/>
    <property type="molecule type" value="Genomic_DNA"/>
</dbReference>
<dbReference type="EMBL" id="X80761">
    <property type="protein sequence ID" value="CAA56734.1"/>
    <property type="molecule type" value="mRNA"/>
</dbReference>
<dbReference type="EMBL" id="U60259">
    <property type="protein sequence ID" value="AAD10856.1"/>
    <property type="molecule type" value="mRNA"/>
</dbReference>
<dbReference type="EMBL" id="U60260">
    <property type="protein sequence ID" value="AAD10857.1"/>
    <property type="molecule type" value="mRNA"/>
</dbReference>
<dbReference type="EMBL" id="U60261">
    <property type="protein sequence ID" value="AAD10858.1"/>
    <property type="molecule type" value="mRNA"/>
</dbReference>
<dbReference type="EMBL" id="AF125525">
    <property type="protein sequence ID" value="AAD27842.1"/>
    <property type="molecule type" value="mRNA"/>
</dbReference>
<dbReference type="EMBL" id="AY466157">
    <property type="protein sequence ID" value="AAR28764.1"/>
    <property type="molecule type" value="mRNA"/>
</dbReference>
<dbReference type="EMBL" id="AY327582">
    <property type="protein sequence ID" value="AAP97013.1"/>
    <property type="molecule type" value="mRNA"/>
</dbReference>
<dbReference type="EMBL" id="AY327584">
    <property type="protein sequence ID" value="AAP97015.1"/>
    <property type="molecule type" value="mRNA"/>
</dbReference>
<dbReference type="EMBL" id="AY327586">
    <property type="protein sequence ID" value="AAP97017.1"/>
    <property type="molecule type" value="mRNA"/>
</dbReference>
<dbReference type="EMBL" id="AY327587">
    <property type="protein sequence ID" value="AAP97018.1"/>
    <property type="molecule type" value="mRNA"/>
</dbReference>
<dbReference type="EMBL" id="EF583653">
    <property type="protein sequence ID" value="ABQ59628.1"/>
    <property type="molecule type" value="mRNA"/>
</dbReference>
<dbReference type="EMBL" id="EF670711">
    <property type="protein sequence ID" value="ABS01298.1"/>
    <property type="molecule type" value="mRNA"/>
</dbReference>
<dbReference type="EMBL" id="EF670712">
    <property type="protein sequence ID" value="ABS01299.1"/>
    <property type="molecule type" value="mRNA"/>
</dbReference>
<dbReference type="EMBL" id="FJ226040">
    <property type="protein sequence ID" value="ACI25172.1"/>
    <property type="molecule type" value="mRNA"/>
</dbReference>
<dbReference type="EMBL" id="FJ226047">
    <property type="protein sequence ID" value="ACI25179.1"/>
    <property type="molecule type" value="mRNA"/>
</dbReference>
<dbReference type="EMBL" id="AF348143">
    <property type="protein sequence ID" value="AAK30142.1"/>
    <property type="molecule type" value="mRNA"/>
</dbReference>
<dbReference type="EMBL" id="AY463543">
    <property type="protein sequence ID" value="AAR18816.1"/>
    <property type="molecule type" value="Genomic_DNA"/>
</dbReference>
<dbReference type="EMBL" id="AL713999">
    <property type="status" value="NOT_ANNOTATED_CDS"/>
    <property type="molecule type" value="Genomic_DNA"/>
</dbReference>
<dbReference type="EMBL" id="CH471121">
    <property type="protein sequence ID" value="EAW53116.1"/>
    <property type="molecule type" value="Genomic_DNA"/>
</dbReference>
<dbReference type="EMBL" id="CH471121">
    <property type="protein sequence ID" value="EAW53117.1"/>
    <property type="molecule type" value="Genomic_DNA"/>
</dbReference>
<dbReference type="EMBL" id="CH471121">
    <property type="protein sequence ID" value="EAW53118.1"/>
    <property type="molecule type" value="Genomic_DNA"/>
</dbReference>
<dbReference type="EMBL" id="CH471121">
    <property type="protein sequence ID" value="EAW53119.1"/>
    <property type="molecule type" value="Genomic_DNA"/>
</dbReference>
<dbReference type="EMBL" id="BC120974">
    <property type="protein sequence ID" value="AAI20975.1"/>
    <property type="molecule type" value="mRNA"/>
</dbReference>
<dbReference type="EMBL" id="BC120975">
    <property type="protein sequence ID" value="AAI20976.1"/>
    <property type="molecule type" value="mRNA"/>
</dbReference>
<dbReference type="EMBL" id="Z17324">
    <property type="protein sequence ID" value="CAA78972.1"/>
    <property type="molecule type" value="mRNA"/>
</dbReference>
<dbReference type="EMBL" id="Z17325">
    <property type="protein sequence ID" value="CAA78973.1"/>
    <property type="molecule type" value="mRNA"/>
</dbReference>
<dbReference type="EMBL" id="M31823">
    <property type="protein sequence ID" value="AAA35757.1"/>
    <property type="molecule type" value="mRNA"/>
</dbReference>
<dbReference type="EMBL" id="S81781">
    <property type="protein sequence ID" value="AAD14376.1"/>
    <property type="status" value="ALT_INIT"/>
    <property type="molecule type" value="mRNA"/>
</dbReference>
<dbReference type="EMBL" id="S81736">
    <property type="protein sequence ID" value="AAD14369.1"/>
    <property type="status" value="ALT_INIT"/>
    <property type="molecule type" value="mRNA"/>
</dbReference>
<dbReference type="EMBL" id="M21868">
    <property type="protein sequence ID" value="AAA59874.1"/>
    <property type="status" value="ALT_SEQ"/>
    <property type="molecule type" value="mRNA"/>
</dbReference>
<dbReference type="CCDS" id="CCDS1098.1">
    <molecule id="P15941-8"/>
</dbReference>
<dbReference type="CCDS" id="CCDS30882.1">
    <molecule id="P15941-11"/>
</dbReference>
<dbReference type="CCDS" id="CCDS30883.1">
    <molecule id="P15941-7"/>
</dbReference>
<dbReference type="CCDS" id="CCDS41408.1">
    <molecule id="P15941-12"/>
</dbReference>
<dbReference type="CCDS" id="CCDS41409.1">
    <molecule id="P15941-10"/>
</dbReference>
<dbReference type="CCDS" id="CCDS55641.1">
    <molecule id="P15941-6"/>
</dbReference>
<dbReference type="CCDS" id="CCDS55642.1">
    <molecule id="P15941-13"/>
</dbReference>
<dbReference type="PIR" id="A35175">
    <property type="entry name" value="A35175"/>
</dbReference>
<dbReference type="RefSeq" id="NP_001018016.1">
    <molecule id="P15941-11"/>
    <property type="nucleotide sequence ID" value="NM_001018016.3"/>
</dbReference>
<dbReference type="RefSeq" id="NP_001018017.1">
    <molecule id="P15941-7"/>
    <property type="nucleotide sequence ID" value="NM_001018017.3"/>
</dbReference>
<dbReference type="RefSeq" id="NP_001037855.1">
    <molecule id="P15941-10"/>
    <property type="nucleotide sequence ID" value="NM_001044390.3"/>
</dbReference>
<dbReference type="RefSeq" id="NP_001037856.1">
    <property type="nucleotide sequence ID" value="NM_001044391.2"/>
</dbReference>
<dbReference type="RefSeq" id="NP_001037857.1">
    <molecule id="P15941-12"/>
    <property type="nucleotide sequence ID" value="NM_001044392.3"/>
</dbReference>
<dbReference type="RefSeq" id="NP_001037858.1">
    <property type="nucleotide sequence ID" value="NM_001044393.2"/>
</dbReference>
<dbReference type="RefSeq" id="NP_001191214.1">
    <property type="nucleotide sequence ID" value="NM_001204285.1"/>
</dbReference>
<dbReference type="RefSeq" id="NP_001191215.1">
    <property type="nucleotide sequence ID" value="NM_001204286.1"/>
</dbReference>
<dbReference type="RefSeq" id="NP_001191216.1">
    <property type="nucleotide sequence ID" value="NM_001204287.1"/>
</dbReference>
<dbReference type="RefSeq" id="NP_001191217.1">
    <property type="nucleotide sequence ID" value="NM_001204288.1"/>
</dbReference>
<dbReference type="RefSeq" id="NP_001191218.1">
    <property type="nucleotide sequence ID" value="NM_001204289.1"/>
</dbReference>
<dbReference type="RefSeq" id="NP_001191219.1">
    <property type="nucleotide sequence ID" value="NM_001204290.1"/>
</dbReference>
<dbReference type="RefSeq" id="NP_001191220.1">
    <property type="nucleotide sequence ID" value="NM_001204291.1"/>
</dbReference>
<dbReference type="RefSeq" id="NP_001191221.1">
    <property type="nucleotide sequence ID" value="NM_001204292.1"/>
</dbReference>
<dbReference type="RefSeq" id="NP_001191222.1">
    <molecule id="P15941-13"/>
    <property type="nucleotide sequence ID" value="NM_001204293.2"/>
</dbReference>
<dbReference type="RefSeq" id="NP_001191223.1">
    <molecule id="P15941-6"/>
    <property type="nucleotide sequence ID" value="NM_001204294.2"/>
</dbReference>
<dbReference type="RefSeq" id="NP_001191224.1">
    <property type="nucleotide sequence ID" value="NM_001204295.1"/>
</dbReference>
<dbReference type="RefSeq" id="NP_001191225.1">
    <property type="nucleotide sequence ID" value="NM_001204296.1"/>
</dbReference>
<dbReference type="RefSeq" id="NP_001191226.1">
    <property type="nucleotide sequence ID" value="NM_001204297.1"/>
</dbReference>
<dbReference type="RefSeq" id="NP_002447.4">
    <molecule id="P15941-8"/>
    <property type="nucleotide sequence ID" value="NM_002456.5"/>
</dbReference>
<dbReference type="PDB" id="1SM3">
    <property type="method" value="X-ray"/>
    <property type="resolution" value="1.95 A"/>
    <property type="chains" value="P=919-931"/>
</dbReference>
<dbReference type="PDB" id="2ACM">
    <property type="method" value="NMR"/>
    <property type="chains" value="A=1042-1097, B=1098-1152"/>
</dbReference>
<dbReference type="PDB" id="2FO4">
    <property type="method" value="X-ray"/>
    <property type="resolution" value="2.70 A"/>
    <property type="chains" value="P=140-146"/>
</dbReference>
<dbReference type="PDB" id="5T6P">
    <property type="method" value="X-ray"/>
    <property type="resolution" value="1.97 A"/>
    <property type="chains" value="E/F=921-928"/>
</dbReference>
<dbReference type="PDB" id="5T78">
    <property type="method" value="X-ray"/>
    <property type="resolution" value="2.20 A"/>
    <property type="chains" value="E/F=921-928"/>
</dbReference>
<dbReference type="PDB" id="6FZQ">
    <property type="method" value="X-ray"/>
    <property type="resolution" value="1.70 A"/>
    <property type="chains" value="P=921-926"/>
</dbReference>
<dbReference type="PDB" id="6FZR">
    <property type="method" value="X-ray"/>
    <property type="resolution" value="1.80 A"/>
    <property type="chains" value="P=921-926"/>
</dbReference>
<dbReference type="PDB" id="6KX1">
    <property type="method" value="X-ray"/>
    <property type="resolution" value="1.77 A"/>
    <property type="chains" value="C=918-932"/>
</dbReference>
<dbReference type="PDB" id="6TGG">
    <property type="method" value="X-ray"/>
    <property type="resolution" value="2.00 A"/>
    <property type="chains" value="P=921-926"/>
</dbReference>
<dbReference type="PDB" id="7Q4I">
    <property type="method" value="X-ray"/>
    <property type="resolution" value="2.40 A"/>
    <property type="chains" value="F/G=921-926"/>
</dbReference>
<dbReference type="PDB" id="7V4W">
    <property type="method" value="X-ray"/>
    <property type="resolution" value="2.10 A"/>
    <property type="chains" value="C=925-937"/>
</dbReference>
<dbReference type="PDB" id="7V64">
    <property type="method" value="X-ray"/>
    <property type="resolution" value="1.56 A"/>
    <property type="chains" value="C=925-937"/>
</dbReference>
<dbReference type="PDB" id="7V7K">
    <property type="method" value="X-ray"/>
    <property type="resolution" value="2.20 A"/>
    <property type="chains" value="C=925-937"/>
</dbReference>
<dbReference type="PDB" id="7V8Q">
    <property type="method" value="X-ray"/>
    <property type="resolution" value="3.20 A"/>
    <property type="chains" value="G/H/I=925-937"/>
</dbReference>
<dbReference type="PDB" id="7VAC">
    <property type="method" value="X-ray"/>
    <property type="resolution" value="3.50 A"/>
    <property type="chains" value="G/H/I=925-937"/>
</dbReference>
<dbReference type="PDB" id="7VAZ">
    <property type="method" value="X-ray"/>
    <property type="resolution" value="2.73 A"/>
    <property type="chains" value="E/G/I=925-937"/>
</dbReference>
<dbReference type="PDB" id="8AXH">
    <property type="method" value="X-ray"/>
    <property type="resolution" value="1.85 A"/>
    <property type="chains" value="A=921-926"/>
</dbReference>
<dbReference type="PDB" id="8P6I">
    <property type="method" value="X-ray"/>
    <property type="resolution" value="2.50 A"/>
    <property type="chains" value="A/a=921-929"/>
</dbReference>
<dbReference type="PDBsum" id="1SM3"/>
<dbReference type="PDBsum" id="2ACM"/>
<dbReference type="PDBsum" id="2FO4"/>
<dbReference type="PDBsum" id="5T6P"/>
<dbReference type="PDBsum" id="5T78"/>
<dbReference type="PDBsum" id="6FZQ"/>
<dbReference type="PDBsum" id="6FZR"/>
<dbReference type="PDBsum" id="6KX1"/>
<dbReference type="PDBsum" id="6TGG"/>
<dbReference type="PDBsum" id="7Q4I"/>
<dbReference type="PDBsum" id="7V4W"/>
<dbReference type="PDBsum" id="7V64"/>
<dbReference type="PDBsum" id="7V7K"/>
<dbReference type="PDBsum" id="7V8Q"/>
<dbReference type="PDBsum" id="7VAC"/>
<dbReference type="PDBsum" id="7VAZ"/>
<dbReference type="PDBsum" id="8AXH"/>
<dbReference type="PDBsum" id="8P6I"/>
<dbReference type="SMR" id="P15941"/>
<dbReference type="BioGRID" id="110669">
    <property type="interactions" value="170"/>
</dbReference>
<dbReference type="CORUM" id="P15941"/>
<dbReference type="DIP" id="DIP-41890N"/>
<dbReference type="FunCoup" id="P15941">
    <property type="interactions" value="33"/>
</dbReference>
<dbReference type="IntAct" id="P15941">
    <property type="interactions" value="121"/>
</dbReference>
<dbReference type="MINT" id="P15941"/>
<dbReference type="STRING" id="9606.ENSP00000484824"/>
<dbReference type="ChEMBL" id="CHEMBL3580494"/>
<dbReference type="DrugBank" id="DB06373">
    <property type="generic name" value="ASI402"/>
</dbReference>
<dbReference type="DrugBank" id="DB11090">
    <property type="generic name" value="Potassium nitrate"/>
</dbReference>
<dbReference type="DrugBank" id="DB06584">
    <property type="generic name" value="TG4010"/>
</dbReference>
<dbReference type="MEROPS" id="S71.001"/>
<dbReference type="GlyConnect" id="372">
    <property type="glycosylation" value="9 O-Linked glycans"/>
</dbReference>
<dbReference type="GlyConnect" id="373">
    <property type="glycosylation" value="8 O-Linked glycans"/>
</dbReference>
<dbReference type="GlyConnect" id="374">
    <property type="glycosylation" value="7 N-Linked glycans (3 sites), 8 O-Linked glycans"/>
</dbReference>
<dbReference type="GlyConnect" id="375">
    <property type="glycosylation" value="10 O-Linked glycans"/>
</dbReference>
<dbReference type="GlyConnect" id="376">
    <property type="glycosylation" value="10 O-Linked glycans"/>
</dbReference>
<dbReference type="GlyConnect" id="377">
    <property type="glycosylation" value="7 O-Linked glycans"/>
</dbReference>
<dbReference type="GlyConnect" id="413">
    <property type="glycosylation" value="5 N-Linked glycans (1 site), 14 O-Linked glycans"/>
</dbReference>
<dbReference type="GlyCosmos" id="P15941">
    <property type="glycosylation" value="17 sites, 54 glycans"/>
</dbReference>
<dbReference type="GlyGen" id="P15941">
    <property type="glycosylation" value="38 sites, 5 N-linked glycans (1 site), 37 O-linked glycans (21 sites)"/>
</dbReference>
<dbReference type="iPTMnet" id="P15941"/>
<dbReference type="PhosphoSitePlus" id="P15941"/>
<dbReference type="SwissPalm" id="P15941"/>
<dbReference type="BioMuta" id="MUC1"/>
<dbReference type="DMDM" id="296439295"/>
<dbReference type="CPTAC" id="CPTAC-146"/>
<dbReference type="CPTAC" id="CPTAC-147"/>
<dbReference type="CPTAC" id="CPTAC-719"/>
<dbReference type="CPTAC" id="CPTAC-730"/>
<dbReference type="jPOST" id="P15941"/>
<dbReference type="MassIVE" id="P15941"/>
<dbReference type="PaxDb" id="9606-ENSP00000484824"/>
<dbReference type="PeptideAtlas" id="P15941"/>
<dbReference type="ProteomicsDB" id="1779"/>
<dbReference type="ProteomicsDB" id="53249">
    <molecule id="P15941-1"/>
</dbReference>
<dbReference type="ProteomicsDB" id="53250">
    <molecule id="P15941-10"/>
</dbReference>
<dbReference type="ProteomicsDB" id="53251">
    <molecule id="P15941-2"/>
</dbReference>
<dbReference type="ProteomicsDB" id="53252">
    <molecule id="P15941-3"/>
</dbReference>
<dbReference type="ProteomicsDB" id="53253">
    <molecule id="P15941-4"/>
</dbReference>
<dbReference type="ProteomicsDB" id="53254">
    <molecule id="P15941-5"/>
</dbReference>
<dbReference type="ProteomicsDB" id="53255">
    <molecule id="P15941-6"/>
</dbReference>
<dbReference type="ProteomicsDB" id="53256">
    <molecule id="P15941-7"/>
</dbReference>
<dbReference type="ProteomicsDB" id="53257">
    <molecule id="P15941-8"/>
</dbReference>
<dbReference type="ProteomicsDB" id="53258">
    <molecule id="P15941-9"/>
</dbReference>
<dbReference type="ProteomicsDB" id="58806"/>
<dbReference type="ProteomicsDB" id="6245"/>
<dbReference type="ProteomicsDB" id="69255"/>
<dbReference type="ProteomicsDB" id="69256"/>
<dbReference type="ProteomicsDB" id="767"/>
<dbReference type="Pumba" id="P15941"/>
<dbReference type="ABCD" id="P15941">
    <property type="antibodies" value="33 sequenced antibodies"/>
</dbReference>
<dbReference type="Antibodypedia" id="1298">
    <property type="antibodies" value="4892 antibodies from 57 providers"/>
</dbReference>
<dbReference type="CPTC" id="P15941">
    <property type="antibodies" value="2 antibodies"/>
</dbReference>
<dbReference type="DNASU" id="4582"/>
<dbReference type="Ensembl" id="ENST00000337604.6">
    <molecule id="P15941-8"/>
    <property type="protein sequence ID" value="ENSP00000338983.5"/>
    <property type="gene ID" value="ENSG00000185499.17"/>
</dbReference>
<dbReference type="Ensembl" id="ENST00000342482.8">
    <molecule id="P15941-16"/>
    <property type="protein sequence ID" value="ENSP00000342814.4"/>
    <property type="gene ID" value="ENSG00000185499.17"/>
</dbReference>
<dbReference type="Ensembl" id="ENST00000343256.9">
    <molecule id="P15941-10"/>
    <property type="protein sequence ID" value="ENSP00000339690.5"/>
    <property type="gene ID" value="ENSG00000185499.17"/>
</dbReference>
<dbReference type="Ensembl" id="ENST00000368389.6">
    <molecule id="P15941-9"/>
    <property type="protein sequence ID" value="ENSP00000357374.2"/>
    <property type="gene ID" value="ENSG00000185499.17"/>
</dbReference>
<dbReference type="Ensembl" id="ENST00000368390.7">
    <molecule id="P15941-7"/>
    <property type="protein sequence ID" value="ENSP00000357375.3"/>
    <property type="gene ID" value="ENSG00000185499.17"/>
</dbReference>
<dbReference type="Ensembl" id="ENST00000368392.7">
    <molecule id="P15941-11"/>
    <property type="protein sequence ID" value="ENSP00000357377.3"/>
    <property type="gene ID" value="ENSG00000185499.17"/>
</dbReference>
<dbReference type="Ensembl" id="ENST00000368393.7">
    <molecule id="P15941-13"/>
    <property type="protein sequence ID" value="ENSP00000357378.3"/>
    <property type="gene ID" value="ENSG00000185499.17"/>
</dbReference>
<dbReference type="Ensembl" id="ENST00000368396.8">
    <molecule id="P15941-12"/>
    <property type="protein sequence ID" value="ENSP00000357381.4"/>
    <property type="gene ID" value="ENSG00000185499.17"/>
</dbReference>
<dbReference type="Ensembl" id="ENST00000368398.7">
    <molecule id="P15941-6"/>
    <property type="protein sequence ID" value="ENSP00000357383.3"/>
    <property type="gene ID" value="ENSG00000185499.17"/>
</dbReference>
<dbReference type="GeneID" id="4582"/>
<dbReference type="KEGG" id="hsa:4582"/>
<dbReference type="UCSC" id="uc001fia.4">
    <molecule id="P15941-1"/>
    <property type="organism name" value="human"/>
</dbReference>
<dbReference type="AGR" id="HGNC:7508"/>
<dbReference type="CTD" id="4582"/>
<dbReference type="DisGeNET" id="4582"/>
<dbReference type="GeneCards" id="MUC1"/>
<dbReference type="GeneReviews" id="MUC1"/>
<dbReference type="HGNC" id="HGNC:7508">
    <property type="gene designation" value="MUC1"/>
</dbReference>
<dbReference type="HPA" id="ENSG00000185499">
    <property type="expression patterns" value="Tissue enhanced (kidney, stomach)"/>
</dbReference>
<dbReference type="MalaCards" id="MUC1"/>
<dbReference type="MIM" id="113720">
    <property type="type" value="gene"/>
</dbReference>
<dbReference type="MIM" id="158340">
    <property type="type" value="gene"/>
</dbReference>
<dbReference type="MIM" id="174000">
    <property type="type" value="phenotype"/>
</dbReference>
<dbReference type="neXtProt" id="NX_P15941"/>
<dbReference type="OpenTargets" id="ENSG00000185499"/>
<dbReference type="Orphanet" id="88949">
    <property type="disease" value="MUC1-related autosomal dominant tubulointerstitial kidney disease"/>
</dbReference>
<dbReference type="PharmGKB" id="PA31309"/>
<dbReference type="VEuPathDB" id="HostDB:ENSG00000185499"/>
<dbReference type="eggNOG" id="ENOG502QWCT">
    <property type="taxonomic scope" value="Eukaryota"/>
</dbReference>
<dbReference type="GeneTree" id="ENSGT00710000106874"/>
<dbReference type="HOGENOM" id="CLU_1386987_0_0_1"/>
<dbReference type="InParanoid" id="P15941"/>
<dbReference type="OrthoDB" id="9909831at2759"/>
<dbReference type="PAN-GO" id="P15941">
    <property type="GO annotations" value="1 GO annotation based on evolutionary models"/>
</dbReference>
<dbReference type="PhylomeDB" id="P15941"/>
<dbReference type="PathwayCommons" id="P15941"/>
<dbReference type="Reactome" id="R-HSA-5083625">
    <property type="pathway name" value="Defective GALNT3 causes HFTC"/>
</dbReference>
<dbReference type="Reactome" id="R-HSA-5083632">
    <property type="pathway name" value="Defective C1GALT1C1 causes TNPS"/>
</dbReference>
<dbReference type="Reactome" id="R-HSA-5083636">
    <property type="pathway name" value="Defective GALNT12 causes CRCS1"/>
</dbReference>
<dbReference type="Reactome" id="R-HSA-5621480">
    <property type="pathway name" value="Dectin-2 family"/>
</dbReference>
<dbReference type="Reactome" id="R-HSA-6785807">
    <property type="pathway name" value="Interleukin-4 and Interleukin-13 signaling"/>
</dbReference>
<dbReference type="Reactome" id="R-HSA-913709">
    <property type="pathway name" value="O-linked glycosylation of mucins"/>
</dbReference>
<dbReference type="Reactome" id="R-HSA-977068">
    <property type="pathway name" value="Termination of O-glycan biosynthesis"/>
</dbReference>
<dbReference type="SignaLink" id="P15941"/>
<dbReference type="SIGNOR" id="P15941"/>
<dbReference type="BioGRID-ORCS" id="4582">
    <property type="hits" value="31 hits in 1174 CRISPR screens"/>
</dbReference>
<dbReference type="ChiTaRS" id="MUC1">
    <property type="organism name" value="human"/>
</dbReference>
<dbReference type="EvolutionaryTrace" id="P15941"/>
<dbReference type="GeneWiki" id="MUC1"/>
<dbReference type="GenomeRNAi" id="4582"/>
<dbReference type="Pharos" id="P15941">
    <property type="development level" value="Tchem"/>
</dbReference>
<dbReference type="PRO" id="PR:P15941"/>
<dbReference type="Proteomes" id="UP000005640">
    <property type="component" value="Chromosome 1"/>
</dbReference>
<dbReference type="RNAct" id="P15941">
    <property type="molecule type" value="protein"/>
</dbReference>
<dbReference type="Bgee" id="ENSG00000185499">
    <property type="expression patterns" value="Expressed in pylorus and 172 other cell types or tissues"/>
</dbReference>
<dbReference type="ExpressionAtlas" id="P15941">
    <property type="expression patterns" value="baseline and differential"/>
</dbReference>
<dbReference type="GO" id="GO:0016324">
    <property type="term" value="C:apical plasma membrane"/>
    <property type="evidence" value="ECO:0000318"/>
    <property type="project" value="GO_Central"/>
</dbReference>
<dbReference type="GO" id="GO:0000785">
    <property type="term" value="C:chromatin"/>
    <property type="evidence" value="ECO:0000314"/>
    <property type="project" value="BHF-UCL"/>
</dbReference>
<dbReference type="GO" id="GO:0070062">
    <property type="term" value="C:extracellular exosome"/>
    <property type="evidence" value="ECO:0000314"/>
    <property type="project" value="UniProtKB"/>
</dbReference>
<dbReference type="GO" id="GO:0005615">
    <property type="term" value="C:extracellular space"/>
    <property type="evidence" value="ECO:0007005"/>
    <property type="project" value="UniProtKB"/>
</dbReference>
<dbReference type="GO" id="GO:0005796">
    <property type="term" value="C:Golgi lumen"/>
    <property type="evidence" value="ECO:0000304"/>
    <property type="project" value="Reactome"/>
</dbReference>
<dbReference type="GO" id="GO:0005634">
    <property type="term" value="C:nucleus"/>
    <property type="evidence" value="ECO:0007669"/>
    <property type="project" value="UniProtKB-SubCell"/>
</dbReference>
<dbReference type="GO" id="GO:0005886">
    <property type="term" value="C:plasma membrane"/>
    <property type="evidence" value="ECO:0000314"/>
    <property type="project" value="HPA"/>
</dbReference>
<dbReference type="GO" id="GO:0031982">
    <property type="term" value="C:vesicle"/>
    <property type="evidence" value="ECO:0007005"/>
    <property type="project" value="UniProtKB"/>
</dbReference>
<dbReference type="GO" id="GO:0002039">
    <property type="term" value="F:p53 binding"/>
    <property type="evidence" value="ECO:0000353"/>
    <property type="project" value="BHF-UCL"/>
</dbReference>
<dbReference type="GO" id="GO:0000978">
    <property type="term" value="F:RNA polymerase II cis-regulatory region sequence-specific DNA binding"/>
    <property type="evidence" value="ECO:0000314"/>
    <property type="project" value="BHF-UCL"/>
</dbReference>
<dbReference type="GO" id="GO:0003712">
    <property type="term" value="F:transcription coregulator activity"/>
    <property type="evidence" value="ECO:0000314"/>
    <property type="project" value="BHF-UCL"/>
</dbReference>
<dbReference type="GO" id="GO:0030330">
    <property type="term" value="P:DNA damage response, signal transduction by p53 class mediator"/>
    <property type="evidence" value="ECO:0000314"/>
    <property type="project" value="BHF-UCL"/>
</dbReference>
<dbReference type="GO" id="GO:0031571">
    <property type="term" value="P:mitotic G1 DNA damage checkpoint signaling"/>
    <property type="evidence" value="ECO:0000314"/>
    <property type="project" value="BHF-UCL"/>
</dbReference>
<dbReference type="GO" id="GO:0033629">
    <property type="term" value="P:negative regulation of cell adhesion mediated by integrin"/>
    <property type="evidence" value="ECO:0000314"/>
    <property type="project" value="CACAO"/>
</dbReference>
<dbReference type="GO" id="GO:1902166">
    <property type="term" value="P:negative regulation of intrinsic apoptotic signaling pathway in response to DNA damage by p53 class mediator"/>
    <property type="evidence" value="ECO:0000314"/>
    <property type="project" value="BHF-UCL"/>
</dbReference>
<dbReference type="GO" id="GO:0010944">
    <property type="term" value="P:negative regulation of transcription by competitive promoter binding"/>
    <property type="evidence" value="ECO:0000314"/>
    <property type="project" value="BHF-UCL"/>
</dbReference>
<dbReference type="GO" id="GO:0045944">
    <property type="term" value="P:positive regulation of transcription by RNA polymerase II"/>
    <property type="evidence" value="ECO:0000314"/>
    <property type="project" value="BHF-UCL"/>
</dbReference>
<dbReference type="DisProt" id="DP01790"/>
<dbReference type="Gene3D" id="6.10.140.600">
    <property type="match status" value="1"/>
</dbReference>
<dbReference type="IDEAL" id="IID00195"/>
<dbReference type="InterPro" id="IPR000082">
    <property type="entry name" value="SEA_dom"/>
</dbReference>
<dbReference type="InterPro" id="IPR036364">
    <property type="entry name" value="SEA_dom_sf"/>
</dbReference>
<dbReference type="PANTHER" id="PTHR10006:SF19">
    <property type="entry name" value="MUCIN-1"/>
    <property type="match status" value="1"/>
</dbReference>
<dbReference type="PANTHER" id="PTHR10006">
    <property type="entry name" value="MUCIN-1-RELATED"/>
    <property type="match status" value="1"/>
</dbReference>
<dbReference type="Pfam" id="PF01390">
    <property type="entry name" value="SEA"/>
    <property type="match status" value="1"/>
</dbReference>
<dbReference type="SMART" id="SM00200">
    <property type="entry name" value="SEA"/>
    <property type="match status" value="1"/>
</dbReference>
<dbReference type="SUPFAM" id="SSF82671">
    <property type="entry name" value="SEA domain"/>
    <property type="match status" value="1"/>
</dbReference>
<dbReference type="PROSITE" id="PS50024">
    <property type="entry name" value="SEA"/>
    <property type="match status" value="1"/>
</dbReference>
<organism>
    <name type="scientific">Homo sapiens</name>
    <name type="common">Human</name>
    <dbReference type="NCBI Taxonomy" id="9606"/>
    <lineage>
        <taxon>Eukaryota</taxon>
        <taxon>Metazoa</taxon>
        <taxon>Chordata</taxon>
        <taxon>Craniata</taxon>
        <taxon>Vertebrata</taxon>
        <taxon>Euteleostomi</taxon>
        <taxon>Mammalia</taxon>
        <taxon>Eutheria</taxon>
        <taxon>Euarchontoglires</taxon>
        <taxon>Primates</taxon>
        <taxon>Haplorrhini</taxon>
        <taxon>Catarrhini</taxon>
        <taxon>Hominidae</taxon>
        <taxon>Homo</taxon>
    </lineage>
</organism>
<comment type="function">
    <text>The alpha subunit has cell adhesive properties. Can act both as an adhesion and an anti-adhesion protein. May provide a protective layer on epithelial cells against bacterial and enzyme attack.</text>
</comment>
<comment type="function">
    <text>The beta subunit contains a C-terminal domain which is involved in cell signaling, through phosphorylations and protein-protein interactions. Modulates signaling in ERK, SRC and NF-kappa-B pathways. In activated T-cells, influences directly or indirectly the Ras/MAPK pathway. Promotes tumor progression. Regulates TP53-mediated transcription and determines cell fate in the genotoxic stress response. Binds, together with KLF4, the PE21 promoter element of TP53 and represses TP53 activity.</text>
</comment>
<comment type="subunit">
    <text evidence="7 8 11 12 13 14 15 16 18 19 20 21 25 26 27 28 29 30 35 38 43">The alpha subunit forms a tight, non-covalent heterodimeric complex with the proteolytically-released beta-subunit. Interaction, via the tandem repeat region, with domain 1 of ICAM1 is implicated in cell migration and metastases. Isoform 1 binds directly the SH2 domain of GRB2, and forms a MUC1/GRB2/SOS1 complex involved in RAS signaling. The cytoplasmic tail (MUC1CT) interacts with several proteins such as SRC, CTNNB1 and ERBs. Interaction with the SH2 domain of CSK decreases interaction with GSK3B. Interacts with CTNNB1/beta-catenin and JUP/gamma-catenin and promotes cell adhesion. Interaction with JUP/gamma-catenin is induced by heregulin. Binds PRKCD, ERBB2, ERBB3 and ERBB4. Heregulin (HRG) stimulates the interaction with ERBB2 and, to a much lesser extent, the interaction with ERBB3 and ERBB4. Interacts with P53 in response to DNA damage. Interacts with KLF4. Interacts with estrogen receptor alpha/ESR1, through its DNA-binding domain, and stimulates its transcription activity. Binds ADAM17. Isoform ZD forms disulfide-linked oligomers.</text>
</comment>
<comment type="interaction">
    <interactant intactId="EBI-2804728">
        <id>P15941</id>
    </interactant>
    <interactant intactId="EBI-375543">
        <id>P00519</id>
        <label>ABL1</label>
    </interactant>
    <organismsDiffer>false</organismsDiffer>
    <experiments>4</experiments>
</comment>
<comment type="interaction">
    <interactant intactId="EBI-2804728">
        <id>P15941</id>
    </interactant>
    <interactant intactId="EBI-297353">
        <id>P00533</id>
        <label>EGFR</label>
    </interactant>
    <organismsDiffer>false</organismsDiffer>
    <experiments>4</experiments>
</comment>
<comment type="interaction">
    <interactant intactId="EBI-2804728">
        <id>P15941</id>
    </interactant>
    <interactant intactId="EBI-1039152">
        <id>P08581</id>
        <label>MET</label>
    </interactant>
    <organismsDiffer>false</organismsDiffer>
    <experiments>2</experiments>
</comment>
<comment type="interaction">
    <interactant intactId="EBI-2804728">
        <id>P15941</id>
    </interactant>
    <interactant intactId="EBI-4396776">
        <id>P15941-7</id>
        <label>MUC1</label>
    </interactant>
    <organismsDiffer>false</organismsDiffer>
    <experiments>2</experiments>
</comment>
<comment type="interaction">
    <interactant intactId="EBI-17263240">
        <id>P15941-11</id>
    </interactant>
    <interactant intactId="EBI-10225815">
        <id>Q08AM2</id>
        <label>ADAM33</label>
    </interactant>
    <organismsDiffer>false</organismsDiffer>
    <experiments>3</experiments>
</comment>
<comment type="interaction">
    <interactant intactId="EBI-17263240">
        <id>P15941-11</id>
    </interactant>
    <interactant intactId="EBI-2682765">
        <id>O60242</id>
        <label>ADGRB3</label>
    </interactant>
    <organismsDiffer>false</organismsDiffer>
    <experiments>3</experiments>
</comment>
<comment type="interaction">
    <interactant intactId="EBI-17263240">
        <id>P15941-11</id>
    </interactant>
    <interactant intactId="EBI-10827839">
        <id>Q15848</id>
        <label>ADIPOQ</label>
    </interactant>
    <organismsDiffer>false</organismsDiffer>
    <experiments>3</experiments>
</comment>
<comment type="interaction">
    <interactant intactId="EBI-17263240">
        <id>P15941-11</id>
    </interactant>
    <interactant intactId="EBI-12109402">
        <id>Q86W74-2</id>
        <label>ANKRD46</label>
    </interactant>
    <organismsDiffer>false</organismsDiffer>
    <experiments>3</experiments>
</comment>
<comment type="interaction">
    <interactant intactId="EBI-17263240">
        <id>P15941-11</id>
    </interactant>
    <interactant intactId="EBI-1171525">
        <id>P02652</id>
        <label>APOA2</label>
    </interactant>
    <organismsDiffer>false</organismsDiffer>
    <experiments>3</experiments>
</comment>
<comment type="interaction">
    <interactant intactId="EBI-17263240">
        <id>P15941-11</id>
    </interactant>
    <interactant intactId="EBI-17264467">
        <id>P05067-2</id>
        <label>APP</label>
    </interactant>
    <organismsDiffer>false</organismsDiffer>
    <experiments>3</experiments>
</comment>
<comment type="interaction">
    <interactant intactId="EBI-17263240">
        <id>P15941-11</id>
    </interactant>
    <interactant intactId="EBI-745213">
        <id>P29972</id>
        <label>AQP1</label>
    </interactant>
    <organismsDiffer>false</organismsDiffer>
    <experiments>3</experiments>
</comment>
<comment type="interaction">
    <interactant intactId="EBI-17263240">
        <id>P15941-11</id>
    </interactant>
    <interactant intactId="EBI-12701138">
        <id>P41181</id>
        <label>AQP2</label>
    </interactant>
    <organismsDiffer>false</organismsDiffer>
    <experiments>3</experiments>
</comment>
<comment type="interaction">
    <interactant intactId="EBI-17263240">
        <id>P15941-11</id>
    </interactant>
    <interactant intactId="EBI-2808854">
        <id>Q92482</id>
        <label>AQP3</label>
    </interactant>
    <organismsDiffer>false</organismsDiffer>
    <experiments>3</experiments>
</comment>
<comment type="interaction">
    <interactant intactId="EBI-17263240">
        <id>P15941-11</id>
    </interactant>
    <interactant intactId="EBI-11724186">
        <id>Q9H2C2</id>
        <label>ARV1</label>
    </interactant>
    <organismsDiffer>false</organismsDiffer>
    <experiments>3</experiments>
</comment>
<comment type="interaction">
    <interactant intactId="EBI-17263240">
        <id>P15941-11</id>
    </interactant>
    <interactant intactId="EBI-707714">
        <id>Q92843</id>
        <label>BCL2L2</label>
    </interactant>
    <organismsDiffer>false</organismsDiffer>
    <experiments>3</experiments>
</comment>
<comment type="interaction">
    <interactant intactId="EBI-17263240">
        <id>P15941-11</id>
    </interactant>
    <interactant intactId="EBI-12244618">
        <id>Q6PL45-2</id>
        <label>BRICD5</label>
    </interactant>
    <organismsDiffer>false</organismsDiffer>
    <experiments>3</experiments>
</comment>
<comment type="interaction">
    <interactant intactId="EBI-17263240">
        <id>P15941-11</id>
    </interactant>
    <interactant intactId="EBI-8648738">
        <id>Q8WVV5</id>
        <label>BTN2A2</label>
    </interactant>
    <organismsDiffer>false</organismsDiffer>
    <experiments>3</experiments>
</comment>
<comment type="interaction">
    <interactant intactId="EBI-17263240">
        <id>P15941-11</id>
    </interactant>
    <interactant intactId="EBI-2835920">
        <id>P06681</id>
        <label>C2</label>
    </interactant>
    <organismsDiffer>false</organismsDiffer>
    <experiments>3</experiments>
</comment>
<comment type="interaction">
    <interactant intactId="EBI-17263240">
        <id>P15941-11</id>
    </interactant>
    <interactant intactId="EBI-12822627">
        <id>O14523</id>
        <label>C2CD2L</label>
    </interactant>
    <organismsDiffer>false</organismsDiffer>
    <experiments>3</experiments>
</comment>
<comment type="interaction">
    <interactant intactId="EBI-17263240">
        <id>P15941-11</id>
    </interactant>
    <interactant intactId="EBI-9686780">
        <id>Q06432</id>
        <label>CACNG1</label>
    </interactant>
    <organismsDiffer>false</organismsDiffer>
    <experiments>3</experiments>
</comment>
<comment type="interaction">
    <interactant intactId="EBI-17263240">
        <id>P15941-11</id>
    </interactant>
    <interactant intactId="EBI-9083477">
        <id>Q9P0B6</id>
        <label>CCDC167</label>
    </interactant>
    <organismsDiffer>false</organismsDiffer>
    <experiments>3</experiments>
</comment>
<comment type="interaction">
    <interactant intactId="EBI-17263240">
        <id>P15941-11</id>
    </interactant>
    <interactant intactId="EBI-17263290">
        <id>Q08722-3</id>
        <label>CD47</label>
    </interactant>
    <organismsDiffer>false</organismsDiffer>
    <experiments>3</experiments>
</comment>
<comment type="interaction">
    <interactant intactId="EBI-17263240">
        <id>P15941-11</id>
    </interactant>
    <interactant intactId="EBI-6657396">
        <id>P19397</id>
        <label>CD53</label>
    </interactant>
    <organismsDiffer>false</organismsDiffer>
    <experiments>3</experiments>
</comment>
<comment type="interaction">
    <interactant intactId="EBI-17263240">
        <id>P15941-11</id>
    </interactant>
    <interactant intactId="EBI-2826276">
        <id>P34810</id>
        <label>CD68</label>
    </interactant>
    <organismsDiffer>false</organismsDiffer>
    <experiments>3</experiments>
</comment>
<comment type="interaction">
    <interactant intactId="EBI-17263240">
        <id>P15941-11</id>
    </interactant>
    <interactant intactId="EBI-12256978">
        <id>Q8N6F1-2</id>
        <label>CLDN19</label>
    </interactant>
    <organismsDiffer>false</organismsDiffer>
    <experiments>3</experiments>
</comment>
<comment type="interaction">
    <interactant intactId="EBI-17263240">
        <id>P15941-11</id>
    </interactant>
    <interactant intactId="EBI-12955011">
        <id>P56747</id>
        <label>CLDN6</label>
    </interactant>
    <organismsDiffer>false</organismsDiffer>
    <experiments>3</experiments>
</comment>
<comment type="interaction">
    <interactant intactId="EBI-17263240">
        <id>P15941-11</id>
    </interactant>
    <interactant intactId="EBI-11959453">
        <id>Q8NHS1</id>
        <label>CLDND2</label>
    </interactant>
    <organismsDiffer>false</organismsDiffer>
    <experiments>3</experiments>
</comment>
<comment type="interaction">
    <interactant intactId="EBI-17263240">
        <id>P15941-11</id>
    </interactant>
    <interactant intactId="EBI-2807956">
        <id>Q96FZ5</id>
        <label>CMTM7</label>
    </interactant>
    <organismsDiffer>false</organismsDiffer>
    <experiments>3</experiments>
</comment>
<comment type="interaction">
    <interactant intactId="EBI-17263240">
        <id>P15941-11</id>
    </interactant>
    <interactant intactId="EBI-10241815">
        <id>Q4VAQ0</id>
        <label>COL8A2</label>
    </interactant>
    <organismsDiffer>false</organismsDiffer>
    <experiments>3</experiments>
</comment>
<comment type="interaction">
    <interactant intactId="EBI-17263240">
        <id>P15941-11</id>
    </interactant>
    <interactant intactId="EBI-10267100">
        <id>Q8N6G5</id>
        <label>CSGALNACT2</label>
    </interactant>
    <organismsDiffer>false</organismsDiffer>
    <experiments>3</experiments>
</comment>
<comment type="interaction">
    <interactant intactId="EBI-17263240">
        <id>P15941-11</id>
    </interactant>
    <interactant intactId="EBI-3911467">
        <id>Q07325</id>
        <label>CXCL9</label>
    </interactant>
    <organismsDiffer>false</organismsDiffer>
    <experiments>3</experiments>
</comment>
<comment type="interaction">
    <interactant intactId="EBI-17263240">
        <id>P15941-11</id>
    </interactant>
    <interactant intactId="EBI-1058710">
        <id>O43169</id>
        <label>CYB5B</label>
    </interactant>
    <organismsDiffer>false</organismsDiffer>
    <experiments>3</experiments>
</comment>
<comment type="interaction">
    <interactant intactId="EBI-17263240">
        <id>P15941-11</id>
    </interactant>
    <interactant intactId="EBI-1752413">
        <id>P78329</id>
        <label>CYP4F2</label>
    </interactant>
    <organismsDiffer>false</organismsDiffer>
    <experiments>3</experiments>
</comment>
<comment type="interaction">
    <interactant intactId="EBI-17263240">
        <id>P15941-11</id>
    </interactant>
    <interactant intactId="EBI-10215665">
        <id>P56851</id>
        <label>EDDM3B</label>
    </interactant>
    <organismsDiffer>false</organismsDiffer>
    <experiments>3</experiments>
</comment>
<comment type="interaction">
    <interactant intactId="EBI-17263240">
        <id>P15941-11</id>
    </interactant>
    <interactant intactId="EBI-2820492">
        <id>Q9BV81</id>
        <label>EMC6</label>
    </interactant>
    <organismsDiffer>false</organismsDiffer>
    <experiments>3</experiments>
</comment>
<comment type="interaction">
    <interactant intactId="EBI-17263240">
        <id>P15941-11</id>
    </interactant>
    <interactant intactId="EBI-3907816">
        <id>P54852</id>
        <label>EMP3</label>
    </interactant>
    <organismsDiffer>false</organismsDiffer>
    <experiments>3</experiments>
</comment>
<comment type="interaction">
    <interactant intactId="EBI-17263240">
        <id>P15941-11</id>
    </interactant>
    <interactant intactId="EBI-12279764">
        <id>O75355-2</id>
        <label>ENTPD3</label>
    </interactant>
    <organismsDiffer>false</organismsDiffer>
    <experiments>3</experiments>
</comment>
<comment type="interaction">
    <interactant intactId="EBI-17263240">
        <id>P15941-11</id>
    </interactant>
    <interactant intactId="EBI-711490">
        <id>Q9UKR5</id>
        <label>ERG28</label>
    </interactant>
    <organismsDiffer>false</organismsDiffer>
    <experiments>3</experiments>
</comment>
<comment type="interaction">
    <interactant intactId="EBI-17263240">
        <id>P15941-11</id>
    </interactant>
    <interactant intactId="EBI-3436637">
        <id>P01350</id>
        <label>GAST</label>
    </interactant>
    <organismsDiffer>false</organismsDiffer>
    <experiments>3</experiments>
</comment>
<comment type="interaction">
    <interactant intactId="EBI-17263240">
        <id>P15941-11</id>
    </interactant>
    <interactant intactId="EBI-12702062">
        <id>P39905-3</id>
        <label>GDNF</label>
    </interactant>
    <organismsDiffer>false</organismsDiffer>
    <experiments>3</experiments>
</comment>
<comment type="interaction">
    <interactant intactId="EBI-17263240">
        <id>P15941-11</id>
    </interactant>
    <interactant intactId="EBI-4402607">
        <id>Q9Y3E0</id>
        <label>GOLT1B</label>
    </interactant>
    <organismsDiffer>false</organismsDiffer>
    <experiments>3</experiments>
</comment>
<comment type="interaction">
    <interactant intactId="EBI-17263240">
        <id>P15941-11</id>
    </interactant>
    <interactant intactId="EBI-11343451">
        <id>Q9NPR9</id>
        <label>GPR108</label>
    </interactant>
    <organismsDiffer>false</organismsDiffer>
    <experiments>3</experiments>
</comment>
<comment type="interaction">
    <interactant intactId="EBI-17263240">
        <id>P15941-11</id>
    </interactant>
    <interactant intactId="EBI-5916693">
        <id>Q9HCP6</id>
        <label>HHATL</label>
    </interactant>
    <organismsDiffer>false</organismsDiffer>
    <experiments>3</experiments>
</comment>
<comment type="interaction">
    <interactant intactId="EBI-17263240">
        <id>P15941-11</id>
    </interactant>
    <interactant intactId="EBI-11721771">
        <id>O60725</id>
        <label>ICMT</label>
    </interactant>
    <organismsDiffer>false</organismsDiffer>
    <experiments>3</experiments>
</comment>
<comment type="interaction">
    <interactant intactId="EBI-17263240">
        <id>P15941-11</id>
    </interactant>
    <interactant intactId="EBI-8503746">
        <id>Q9Y5U4</id>
        <label>INSIG2</label>
    </interactant>
    <organismsDiffer>false</organismsDiffer>
    <experiments>3</experiments>
</comment>
<comment type="interaction">
    <interactant intactId="EBI-17263240">
        <id>P15941-11</id>
    </interactant>
    <interactant intactId="EBI-2568251">
        <id>P11215</id>
        <label>ITGAM</label>
    </interactant>
    <organismsDiffer>false</organismsDiffer>
    <experiments>3</experiments>
</comment>
<comment type="interaction">
    <interactant intactId="EBI-17263240">
        <id>P15941-11</id>
    </interactant>
    <interactant intactId="EBI-944295">
        <id>Q969L2</id>
        <label>MAL2</label>
    </interactant>
    <organismsDiffer>false</organismsDiffer>
    <experiments>3</experiments>
</comment>
<comment type="interaction">
    <interactant intactId="EBI-17263240">
        <id>P15941-11</id>
    </interactant>
    <interactant intactId="EBI-750078">
        <id>Q13021</id>
        <label>MALL</label>
    </interactant>
    <organismsDiffer>false</organismsDiffer>
    <experiments>3</experiments>
</comment>
<comment type="interaction">
    <interactant intactId="EBI-17263240">
        <id>P15941-11</id>
    </interactant>
    <interactant intactId="EBI-10317612">
        <id>Q9P0N8</id>
        <label>MARCHF2</label>
    </interactant>
    <organismsDiffer>false</organismsDiffer>
    <experiments>3</experiments>
</comment>
<comment type="interaction">
    <interactant intactId="EBI-17263240">
        <id>P15941-11</id>
    </interactant>
    <interactant intactId="EBI-3920969">
        <id>Q6N075</id>
        <label>MFSD5</label>
    </interactant>
    <organismsDiffer>false</organismsDiffer>
    <experiments>3</experiments>
</comment>
<comment type="interaction">
    <interactant intactId="EBI-17263240">
        <id>P15941-11</id>
    </interactant>
    <interactant intactId="EBI-8449636">
        <id>P30301</id>
        <label>MIP</label>
    </interactant>
    <organismsDiffer>false</organismsDiffer>
    <experiments>3</experiments>
</comment>
<comment type="interaction">
    <interactant intactId="EBI-17263240">
        <id>P15941-11</id>
    </interactant>
    <interactant intactId="EBI-13301517">
        <id>Q96S97</id>
        <label>MYADM</label>
    </interactant>
    <organismsDiffer>false</organismsDiffer>
    <experiments>3</experiments>
</comment>
<comment type="interaction">
    <interactant intactId="EBI-17263240">
        <id>P15941-11</id>
    </interactant>
    <interactant intactId="EBI-1246131">
        <id>O95167</id>
        <label>NDUFA3</label>
    </interactant>
    <organismsDiffer>false</organismsDiffer>
    <experiments>3</experiments>
</comment>
<comment type="interaction">
    <interactant intactId="EBI-17263240">
        <id>P15941-11</id>
    </interactant>
    <interactant intactId="EBI-721517">
        <id>Q99519</id>
        <label>NEU1</label>
    </interactant>
    <organismsDiffer>false</organismsDiffer>
    <experiments>3</experiments>
</comment>
<comment type="interaction">
    <interactant intactId="EBI-17263240">
        <id>P15941-11</id>
    </interactant>
    <interactant intactId="EBI-2802124">
        <id>Q92982</id>
        <label>NINJ1</label>
    </interactant>
    <organismsDiffer>false</organismsDiffer>
    <experiments>3</experiments>
</comment>
<comment type="interaction">
    <interactant intactId="EBI-17263240">
        <id>P15941-11</id>
    </interactant>
    <interactant intactId="EBI-10317425">
        <id>Q9NZG7</id>
        <label>NINJ2</label>
    </interactant>
    <organismsDiffer>false</organismsDiffer>
    <experiments>3</experiments>
</comment>
<comment type="interaction">
    <interactant intactId="EBI-17263240">
        <id>P15941-11</id>
    </interactant>
    <interactant intactId="EBI-3919611">
        <id>Q16617</id>
        <label>NKG7</label>
    </interactant>
    <organismsDiffer>false</organismsDiffer>
    <experiments>3</experiments>
</comment>
<comment type="interaction">
    <interactant intactId="EBI-17263240">
        <id>P15941-11</id>
    </interactant>
    <interactant intactId="EBI-12051377">
        <id>Q8N912</id>
        <label>NRAC</label>
    </interactant>
    <organismsDiffer>false</organismsDiffer>
    <experiments>3</experiments>
</comment>
<comment type="interaction">
    <interactant intactId="EBI-17263240">
        <id>P15941-11</id>
    </interactant>
    <interactant intactId="EBI-13339917">
        <id>Q8NH19</id>
        <label>OR10AG1</label>
    </interactant>
    <organismsDiffer>false</organismsDiffer>
    <experiments>3</experiments>
</comment>
<comment type="interaction">
    <interactant intactId="EBI-17263240">
        <id>P15941-11</id>
    </interactant>
    <interactant intactId="EBI-17265310">
        <id>Q6TCH4</id>
        <label>PAQR6</label>
    </interactant>
    <organismsDiffer>false</organismsDiffer>
    <experiments>3</experiments>
</comment>
<comment type="interaction">
    <interactant intactId="EBI-17263240">
        <id>P15941-11</id>
    </interactant>
    <interactant intactId="EBI-692836">
        <id>P26678</id>
        <label>PLN</label>
    </interactant>
    <organismsDiffer>false</organismsDiffer>
    <experiments>3</experiments>
</comment>
<comment type="interaction">
    <interactant intactId="EBI-17263240">
        <id>P15941-11</id>
    </interactant>
    <interactant intactId="EBI-12188331">
        <id>P60201-2</id>
        <label>PLP1</label>
    </interactant>
    <organismsDiffer>false</organismsDiffer>
    <experiments>3</experiments>
</comment>
<comment type="interaction">
    <interactant intactId="EBI-17263240">
        <id>P15941-11</id>
    </interactant>
    <interactant intactId="EBI-11721828">
        <id>Q8IY26</id>
        <label>PLPP6</label>
    </interactant>
    <organismsDiffer>false</organismsDiffer>
    <experiments>3</experiments>
</comment>
<comment type="interaction">
    <interactant intactId="EBI-17263240">
        <id>P15941-11</id>
    </interactant>
    <interactant intactId="EBI-8652812">
        <id>P54315</id>
        <label>PNLIPRP1</label>
    </interactant>
    <organismsDiffer>false</organismsDiffer>
    <experiments>3</experiments>
</comment>
<comment type="interaction">
    <interactant intactId="EBI-17263240">
        <id>P15941-11</id>
    </interactant>
    <interactant intactId="EBI-14210385">
        <id>Q59EV6</id>
        <label>PPGB</label>
    </interactant>
    <organismsDiffer>false</organismsDiffer>
    <experiments>3</experiments>
</comment>
<comment type="interaction">
    <interactant intactId="EBI-17263240">
        <id>P15941-11</id>
    </interactant>
    <interactant intactId="EBI-5544229">
        <id>P30405</id>
        <label>PPIF</label>
    </interactant>
    <organismsDiffer>false</organismsDiffer>
    <experiments>3</experiments>
</comment>
<comment type="interaction">
    <interactant intactId="EBI-17263240">
        <id>P15941-11</id>
    </interactant>
    <interactant intactId="EBI-6269616">
        <id>Q96AA3</id>
        <label>RFT1</label>
    </interactant>
    <organismsDiffer>false</organismsDiffer>
    <experiments>3</experiments>
</comment>
<comment type="interaction">
    <interactant intactId="EBI-17263240">
        <id>P15941-11</id>
    </interactant>
    <interactant intactId="EBI-17249212">
        <id>Q02161-2</id>
        <label>RHD</label>
    </interactant>
    <organismsDiffer>false</organismsDiffer>
    <experiments>3</experiments>
</comment>
<comment type="interaction">
    <interactant intactId="EBI-17263240">
        <id>P15941-11</id>
    </interactant>
    <interactant intactId="EBI-2695784">
        <id>Q8TAC9</id>
        <label>SCAMP5</label>
    </interactant>
    <organismsDiffer>false</organismsDiffer>
    <experiments>3</experiments>
</comment>
<comment type="interaction">
    <interactant intactId="EBI-17263240">
        <id>P15941-11</id>
    </interactant>
    <interactant intactId="EBI-9679163">
        <id>Q9Y6D0</id>
        <label>SELENOK</label>
    </interactant>
    <organismsDiffer>false</organismsDiffer>
    <experiments>3</experiments>
</comment>
<comment type="interaction">
    <interactant intactId="EBI-17263240">
        <id>P15941-11</id>
    </interactant>
    <interactant intactId="EBI-749270">
        <id>Q8N6R1</id>
        <label>SERP2</label>
    </interactant>
    <organismsDiffer>false</organismsDiffer>
    <experiments>3</experiments>
</comment>
<comment type="interaction">
    <interactant intactId="EBI-17263240">
        <id>P15941-11</id>
    </interactant>
    <interactant intactId="EBI-10197617">
        <id>P11686</id>
        <label>SFTPC</label>
    </interactant>
    <organismsDiffer>false</organismsDiffer>
    <experiments>3</experiments>
</comment>
<comment type="interaction">
    <interactant intactId="EBI-17263240">
        <id>P15941-11</id>
    </interactant>
    <interactant intactId="EBI-10262251">
        <id>Q8IWU4</id>
        <label>SLC30A8</label>
    </interactant>
    <organismsDiffer>false</organismsDiffer>
    <experiments>3</experiments>
</comment>
<comment type="interaction">
    <interactant intactId="EBI-17263240">
        <id>P15941-11</id>
    </interactant>
    <interactant intactId="EBI-10281213">
        <id>Q969S0</id>
        <label>SLC35B4</label>
    </interactant>
    <organismsDiffer>false</organismsDiffer>
    <experiments>3</experiments>
</comment>
<comment type="interaction">
    <interactant intactId="EBI-17263240">
        <id>P15941-11</id>
    </interactant>
    <interactant intactId="EBI-12867720">
        <id>Q6ICL7</id>
        <label>SLC35E4</label>
    </interactant>
    <organismsDiffer>false</organismsDiffer>
    <experiments>3</experiments>
</comment>
<comment type="interaction">
    <interactant intactId="EBI-17263240">
        <id>P15941-11</id>
    </interactant>
    <interactant intactId="EBI-10314552">
        <id>Q9NVC3</id>
        <label>SLC38A7</label>
    </interactant>
    <organismsDiffer>false</organismsDiffer>
    <experiments>3</experiments>
</comment>
<comment type="interaction">
    <interactant intactId="EBI-17263240">
        <id>P15941-11</id>
    </interactant>
    <interactant intactId="EBI-8640191">
        <id>Q9NRQ5</id>
        <label>SMCO4</label>
    </interactant>
    <organismsDiffer>false</organismsDiffer>
    <experiments>3</experiments>
</comment>
<comment type="interaction">
    <interactant intactId="EBI-17263240">
        <id>P15941-11</id>
    </interactant>
    <interactant intactId="EBI-12188413">
        <id>B2RUZ4</id>
        <label>SMIM1</label>
    </interactant>
    <organismsDiffer>false</organismsDiffer>
    <experiments>3</experiments>
</comment>
<comment type="interaction">
    <interactant intactId="EBI-17263240">
        <id>P15941-11</id>
    </interactant>
    <interactant intactId="EBI-2877718">
        <id>Q9NZ01</id>
        <label>TECR</label>
    </interactant>
    <organismsDiffer>false</organismsDiffer>
    <experiments>3</experiments>
</comment>
<comment type="interaction">
    <interactant intactId="EBI-17263240">
        <id>P15941-11</id>
    </interactant>
    <interactant intactId="EBI-941422">
        <id>P07204</id>
        <label>THBD</label>
    </interactant>
    <organismsDiffer>false</organismsDiffer>
    <experiments>3</experiments>
</comment>
<comment type="interaction">
    <interactant intactId="EBI-17263240">
        <id>P15941-11</id>
    </interactant>
    <interactant intactId="EBI-13082040">
        <id>Q9BZW4</id>
        <label>TM6SF2</label>
    </interactant>
    <organismsDiffer>false</organismsDiffer>
    <experiments>3</experiments>
</comment>
<comment type="interaction">
    <interactant intactId="EBI-17263240">
        <id>P15941-11</id>
    </interactant>
    <interactant intactId="EBI-723946">
        <id>P17152</id>
        <label>TMEM11</label>
    </interactant>
    <organismsDiffer>false</organismsDiffer>
    <experiments>3</experiments>
</comment>
<comment type="interaction">
    <interactant intactId="EBI-17263240">
        <id>P15941-11</id>
    </interactant>
    <interactant intactId="EBI-10171534">
        <id>A0PK00</id>
        <label>TMEM120B</label>
    </interactant>
    <organismsDiffer>false</organismsDiffer>
    <experiments>3</experiments>
</comment>
<comment type="interaction">
    <interactant intactId="EBI-17263240">
        <id>P15941-11</id>
    </interactant>
    <interactant intactId="EBI-12155101">
        <id>Q9BTD3</id>
        <label>TMEM121</label>
    </interactant>
    <organismsDiffer>false</organismsDiffer>
    <experiments>3</experiments>
</comment>
<comment type="interaction">
    <interactant intactId="EBI-17263240">
        <id>P15941-11</id>
    </interactant>
    <interactant intactId="EBI-10694905">
        <id>Q5BJH2-2</id>
        <label>TMEM128</label>
    </interactant>
    <organismsDiffer>false</organismsDiffer>
    <experiments>3</experiments>
</comment>
<comment type="interaction">
    <interactant intactId="EBI-17263240">
        <id>P15941-11</id>
    </interactant>
    <interactant intactId="EBI-348587">
        <id>Q9BVK8</id>
        <label>TMEM147</label>
    </interactant>
    <organismsDiffer>false</organismsDiffer>
    <experiments>3</experiments>
</comment>
<comment type="interaction">
    <interactant intactId="EBI-17263240">
        <id>P15941-11</id>
    </interactant>
    <interactant intactId="EBI-2800360">
        <id>Q9Y6G1</id>
        <label>TMEM14A</label>
    </interactant>
    <organismsDiffer>false</organismsDiffer>
    <experiments>3</experiments>
</comment>
<comment type="interaction">
    <interactant intactId="EBI-17263240">
        <id>P15941-11</id>
    </interactant>
    <interactant intactId="EBI-2339195">
        <id>Q9P0S9</id>
        <label>TMEM14C</label>
    </interactant>
    <organismsDiffer>false</organismsDiffer>
    <experiments>3</experiments>
</comment>
<comment type="interaction">
    <interactant intactId="EBI-17263240">
        <id>P15941-11</id>
    </interactant>
    <interactant intactId="EBI-13046724">
        <id>Q14656</id>
        <label>TMEM187</label>
    </interactant>
    <organismsDiffer>false</organismsDiffer>
    <experiments>3</experiments>
</comment>
<comment type="interaction">
    <interactant intactId="EBI-17263240">
        <id>P15941-11</id>
    </interactant>
    <interactant intactId="EBI-12195227">
        <id>Q8NBD8</id>
        <label>TMEM229B</label>
    </interactant>
    <organismsDiffer>false</organismsDiffer>
    <experiments>3</experiments>
</comment>
<comment type="interaction">
    <interactant intactId="EBI-17263240">
        <id>P15941-11</id>
    </interactant>
    <interactant intactId="EBI-12887458">
        <id>Q9BU79</id>
        <label>TMEM243</label>
    </interactant>
    <organismsDiffer>false</organismsDiffer>
    <experiments>3</experiments>
</comment>
<comment type="interaction">
    <interactant intactId="EBI-17263240">
        <id>P15941-11</id>
    </interactant>
    <interactant intactId="EBI-12015604">
        <id>Q8N2M4</id>
        <label>TMEM86A</label>
    </interactant>
    <organismsDiffer>false</organismsDiffer>
    <experiments>3</experiments>
</comment>
<comment type="interaction">
    <interactant intactId="EBI-17263240">
        <id>P15941-11</id>
    </interactant>
    <interactant intactId="EBI-2548832">
        <id>Q8N661</id>
        <label>TMEM86B</label>
    </interactant>
    <organismsDiffer>false</organismsDiffer>
    <experiments>3</experiments>
</comment>
<comment type="interaction">
    <interactant intactId="EBI-17263240">
        <id>P15941-11</id>
    </interactant>
    <interactant intactId="EBI-12111910">
        <id>Q5BJF2</id>
        <label>TMEM97</label>
    </interactant>
    <organismsDiffer>false</organismsDiffer>
    <experiments>3</experiments>
</comment>
<comment type="interaction">
    <interactant intactId="EBI-17263240">
        <id>P15941-11</id>
    </interactant>
    <interactant intactId="EBI-7333781">
        <id>Q9Y2Y6</id>
        <label>TMEM98</label>
    </interactant>
    <organismsDiffer>false</organismsDiffer>
    <experiments>3</experiments>
</comment>
<comment type="interaction">
    <interactant intactId="EBI-17263240">
        <id>P15941-11</id>
    </interactant>
    <interactant intactId="EBI-518882">
        <id>O14763</id>
        <label>TNFRSF10B</label>
    </interactant>
    <organismsDiffer>false</organismsDiffer>
    <experiments>3</experiments>
</comment>
<comment type="interaction">
    <interactant intactId="EBI-17263240">
        <id>P15941-11</id>
    </interactant>
    <interactant intactId="EBI-11996766">
        <id>Q8N609</id>
        <label>TRAM1L1</label>
    </interactant>
    <organismsDiffer>false</organismsDiffer>
    <experiments>3</experiments>
</comment>
<comment type="interaction">
    <interactant intactId="EBI-17263240">
        <id>P15941-11</id>
    </interactant>
    <interactant intactId="EBI-10243654">
        <id>Q5BVD1</id>
        <label>TTMP</label>
    </interactant>
    <organismsDiffer>false</organismsDiffer>
    <experiments>3</experiments>
</comment>
<comment type="interaction">
    <interactant intactId="EBI-17263240">
        <id>P15941-11</id>
    </interactant>
    <interactant intactId="EBI-7601760">
        <id>Q53HI1</id>
        <label>UNC50</label>
    </interactant>
    <organismsDiffer>false</organismsDiffer>
    <experiments>3</experiments>
</comment>
<comment type="interaction">
    <interactant intactId="EBI-17263240">
        <id>P15941-11</id>
    </interactant>
    <interactant intactId="EBI-10191195">
        <id>O95183</id>
        <label>VAMP5</label>
    </interactant>
    <organismsDiffer>false</organismsDiffer>
    <experiments>3</experiments>
</comment>
<comment type="interaction">
    <interactant intactId="EBI-17263240">
        <id>P15941-11</id>
    </interactant>
    <interactant intactId="EBI-6256462">
        <id>Q9BQB6</id>
        <label>VKORC1</label>
    </interactant>
    <organismsDiffer>false</organismsDiffer>
    <experiments>3</experiments>
</comment>
<comment type="interaction">
    <interactant intactId="EBI-17263240">
        <id>P15941-11</id>
    </interactant>
    <interactant intactId="EBI-2849773">
        <id>Q8IVQ6</id>
        <label>ZDHHC21</label>
    </interactant>
    <organismsDiffer>false</organismsDiffer>
    <experiments>3</experiments>
</comment>
<comment type="interaction">
    <interactant intactId="EBI-34603716">
        <id>P15941-12</id>
    </interactant>
    <interactant intactId="EBI-375543">
        <id>P00519</id>
        <label>ABL1</label>
    </interactant>
    <organismsDiffer>false</organismsDiffer>
    <experiments>4</experiments>
</comment>
<comment type="interaction">
    <interactant intactId="EBI-10053698">
        <id>PRO_0000317447</id>
    </interactant>
    <interactant intactId="EBI-969696">
        <id>P17676</id>
        <label>CEBPB</label>
    </interactant>
    <organismsDiffer>false</organismsDiffer>
    <experiments>8</experiments>
</comment>
<comment type="subcellular location">
    <subcellularLocation>
        <location evidence="6 15 16 19 23 27 30 31">Apical cell membrane</location>
        <topology evidence="6 15 16 19 23 27 30 31">Single-pass type I membrane protein</topology>
    </subcellularLocation>
    <text>Exclusively located in the apical domain of the plasma membrane of highly polarized epithelial cells. After endocytosis, internalized and recycled to the cell membrane. Located to microvilli and to the tips of long filopodial protusions.</text>
</comment>
<comment type="subcellular location">
    <molecule>Isoform 5</molecule>
    <subcellularLocation>
        <location>Secreted</location>
    </subcellularLocation>
</comment>
<comment type="subcellular location">
    <molecule>Isoform Y</molecule>
    <subcellularLocation>
        <location>Secreted</location>
    </subcellularLocation>
</comment>
<comment type="subcellular location">
    <molecule>Isoform 9</molecule>
    <subcellularLocation>
        <location>Secreted</location>
    </subcellularLocation>
</comment>
<comment type="subcellular location">
    <molecule>Mucin-1 subunit beta</molecule>
    <subcellularLocation>
        <location>Cell membrane</location>
    </subcellularLocation>
    <subcellularLocation>
        <location>Cytoplasm</location>
    </subcellularLocation>
    <subcellularLocation>
        <location>Nucleus</location>
    </subcellularLocation>
    <text>On EGF and PDGFRB stimulation, transported to the nucleus through interaction with CTNNB1, a process which is stimulated by phosphorylation. On HRG stimulation, colocalizes with JUP/gamma-catenin at the nucleus.</text>
</comment>
<comment type="alternative products">
    <event type="alternative splicing"/>
    <isoform>
        <id>P15941-1</id>
        <name>1</name>
        <name>A</name>
        <sequence type="displayed"/>
    </isoform>
    <isoform>
        <id>P15941-2</id>
        <name>2</name>
        <name>B</name>
        <sequence type="described" ref="VSP_003280"/>
    </isoform>
    <isoform>
        <id>P15941-3</id>
        <name>3</name>
        <name>C</name>
        <sequence type="described" ref="VSP_003281"/>
    </isoform>
    <isoform>
        <id>P15941-4</id>
        <name>4</name>
        <name>D</name>
        <sequence type="described" ref="VSP_003282"/>
    </isoform>
    <isoform>
        <id>P15941-5</id>
        <name>5</name>
        <name>SEC</name>
        <sequence type="described" ref="VSP_003288 VSP_003289"/>
    </isoform>
    <isoform>
        <id>P15941-6</id>
        <name>6</name>
        <name>X</name>
        <sequence type="described" ref="VSP_003283 VSP_003284"/>
    </isoform>
    <isoform>
        <id>P15941-7</id>
        <name>Y</name>
        <name>MUC1/Y</name>
        <sequence type="described" ref="VSP_003285"/>
    </isoform>
    <isoform>
        <id>P15941-8</id>
        <name>8</name>
        <name>Z</name>
        <sequence type="described" ref="VSP_003286"/>
    </isoform>
    <isoform>
        <id>P15941-9</id>
        <name>9</name>
        <name>S</name>
        <sequence type="described" ref="VSP_003286 VSP_003287"/>
    </isoform>
    <isoform>
        <id>P15941-10</id>
        <name>F</name>
        <sequence type="described" ref="VSP_035046 VSP_035047"/>
    </isoform>
    <isoform>
        <id>P15941-11</id>
        <name>Y-LSP</name>
        <sequence type="described" ref="VSP_003280 VSP_003285"/>
    </isoform>
    <isoform>
        <id>P15941-12</id>
        <name>S2</name>
        <sequence type="described" ref="VSP_003280 VSP_003285 VSP_003287"/>
    </isoform>
    <isoform>
        <id>P15941-13</id>
        <name>M6</name>
        <sequence type="described" ref="VSP_003286 VSP_046962 VSP_046963"/>
    </isoform>
    <isoform>
        <id>P15941-14</id>
        <name>ZD</name>
        <name>J19</name>
        <sequence type="described" ref="VSP_047575 VSP_047576"/>
    </isoform>
    <isoform>
        <id>P15941-15</id>
        <name>T10</name>
        <sequence type="described" ref="VSP_003280 VSP_047873"/>
    </isoform>
    <isoform>
        <id>P15941-16</id>
        <name>E2</name>
        <sequence type="described" ref="VSP_003280 VSP_047872"/>
    </isoform>
    <isoform>
        <id>P15941-17</id>
        <name>J13</name>
        <sequence type="described" ref="VSP_003280 VSP_003285 VSP_047874"/>
    </isoform>
    <text>Additional isoforms seem to exist.</text>
</comment>
<comment type="tissue specificity">
    <text evidence="20 39">Expressed on the apical surface of epithelial cells, especially of airway passages, breast and uterus. Also expressed in activated and unactivated T-cells. Overexpressed in epithelial tumors, such as breast or ovarian cancer and also in non-epithelial tumor cells. Isoform Y is expressed in tumor cells only.</text>
</comment>
<comment type="developmental stage">
    <text evidence="41">During fetal development, expressed at low levels in the colonic epithelium from 13 weeks of gestation.</text>
</comment>
<comment type="PTM">
    <text evidence="5 36 40 42">Highly glycosylated (N- and O-linked carbohydrates and sialic acid). O-glycosylated to a varying degree on serine and threonine residues within each tandem repeat, ranging from mono- to penta-glycosylation. The average density ranges from about 50% in human milk to over 90% in T47D breast cancer cells. Further sialylation occurs during recycling. Membrane-shed glycoproteins from kidney and breast cancer cells have preferentially sialyated core 1 structures, while secreted forms from the same tissues display mainly core 2 structures. The O-glycosylated content is overlapping in both these tissues with terminal fucose and galactose, 2- and 3-linked galactose, 3- and 3,6-linked GalNAc-ol and 4-linked GlcNAc predominating. Differentially O-glycosylated in breast carcinomas with 3,4-linked GlcNAc. N-glycosylation consists of high-mannose, acidic complex-type and hybrid glycans in the secreted form MUC1/SEC, and neutral complex-type in the transmembrane form, MUC1/TM.</text>
</comment>
<comment type="PTM">
    <text evidence="9 13 24">Proteolytic cleavage in the SEA domain occurs in the endoplasmic reticulum by an autoproteolytic mechanism and requires the full-length SEA domain as well as requiring a Ser, Thr or Cys residue at the P + 1 site. Cleavage at this site also occurs on isoform MUC1/X but not on isoform MUC1/Y. Ectodomain shedding is mediated by ADAM17.</text>
</comment>
<comment type="PTM">
    <text evidence="27">Dual palmitoylation on cysteine residues in the CQC motif is required for recycling from endosomes back to the plasma membrane.</text>
</comment>
<comment type="PTM">
    <text evidence="7 11 12 14 17 20 25 31 35 37 43">Phosphorylated on tyrosines and serine residues in the C-terminal. Phosphorylation on tyrosines in the C-terminal increases the nuclear location of MUC1 and beta-catenin. Phosphorylation by PKC delta induces binding of MUC1 to beta-catenin/CTNNB1 and thus decreases the formation of the beta-catenin/E-cadherin complex. Src-mediated phosphorylation inhibits interaction with GSK3B. Src- and EGFR-mediated phosphorylation on Tyr-1229 increases binding to beta-catenin/CTNNB1. GSK3B-mediated phosphorylation on Ser-1227 decreases this interaction but restores the formation of the beta-cadherin/E-cadherin complex. On T-cell receptor activation, phosphorylated by LCK. PDGFR-mediated phosphorylation increases nuclear colocalization of MUC1CT and CTNNB1.</text>
</comment>
<comment type="PTM">
    <text evidence="9">The N-terminal sequence has been shown to begin at position 24 or 28.</text>
</comment>
<comment type="polymorphism">
    <text>The number of repeats is highly polymorphic. It varies from 21 to 125 in the northern European population. The most frequent alleles contains 41 and 85 repeats. The tandemly repeated icosapeptide underlies polymorphism at three positions: PAPGSTAP[PAQT]AHGVTSAP[DT/ES]R, DT -&gt; ES and the single replacements P -&gt; A, P -&gt; Q and P-&gt; T. The most frequent replacement DT -&gt; ES occurs in up to 50% of the repeats.</text>
</comment>
<comment type="disease">
    <text evidence="32">MUC1/CA 15-3 is used as a serological clinical marker of breast cancer to monitor response to breast cancer treatment and disease recurrence (PubMed:20816948). Decreased levels over time may be indicative of a positive response to treatment. Conversely, increased levels may indicate disease progression. At an early stage disease, only 21% of patients exhibit high MUC1/CA 15-3 levels, that is why CA 15-3 is not a useful screening test. Most antibodies target the highly immunodominant core peptide domain of 20 amino acid (APDTRPAPGSTAPPAHGVTS) tandem repeats. Some antibodies recognize glycosylated epitopes.</text>
</comment>
<comment type="disease" evidence="34">
    <disease id="DI-03826">
        <name>Tubulointerstitial kidney disease, autosomal dominant 2</name>
        <acronym>ADTKD2</acronym>
        <description>A form of autosomal dominant tubulointerstitial kidney disease, a genetically heterogeneous disorder characterized by slowly progressive loss of kidney function, bland urinary sediment, hyperuricemia, absent or mildly increased albuminuria, lack of severe hypertension during the early stages, and normal or small kidneys on ultrasound. Renal histology shows variable abnormalities including interstitial fibrosis with tubular atrophy, microcystic dilatation of the tubules, thickening of tubular basement membranes, medullary cysts, and secondary glomerulosclerotic or glomerulocystic changes with abnormal glomerular tufting. There is significant variability, as well as incomplete penetrance.</description>
        <dbReference type="MIM" id="174000"/>
    </disease>
    <text>The disease is caused by variants affecting the gene represented in this entry.</text>
</comment>
<comment type="miscellaneous">
    <text>The name KL-6 was originally that of a murine monoclonal antibody reacting with pulmonary adenocarcinoma cell lines and pulmonary epithelial cells. This antibody recognizes a sialylated carbohydrate chain on MUC1.</text>
</comment>
<comment type="miscellaneous">
    <molecule>Isoform Y-LSP</molecule>
    <text evidence="60">Lacks the mucin repeats.</text>
</comment>
<comment type="miscellaneous">
    <molecule>Isoform ZD</molecule>
    <text evidence="60">Lacks the mucin repeats. Exists as a disulfide-linked oligomer.</text>
</comment>
<comment type="caution">
    <text evidence="61 62">O-glycosylation sites are annotated in first sequence repeat only. Residues at similar position are probably glycosylated in all repeats. Experimental sites were determined in a synthetic peptide glycosylated in vitro (PubMed:7744025, PubMed:9597769).</text>
</comment>
<comment type="sequence caution" evidence="60">
    <conflict type="erroneous initiation">
        <sequence resource="EMBL-CDS" id="AAD14369"/>
    </conflict>
    <text>Extended N-terminus.</text>
</comment>
<comment type="sequence caution" evidence="60">
    <conflict type="erroneous initiation">
        <sequence resource="EMBL-CDS" id="AAD14376"/>
    </conflict>
    <text>Extended N-terminus.</text>
</comment>
<comment type="online information" name="Mucin database">
    <link uri="http://www.medkem.gu.se/mucinbiology/databases/"/>
</comment>
<gene>
    <name type="primary">MUC1</name>
    <name type="synonym">PUM</name>
</gene>
<proteinExistence type="evidence at protein level"/>
<accession>P15941</accession>
<accession>A5YRV1</accession>
<accession>A6ZID9</accession>
<accession>A6ZIE0</accession>
<accession>B1AVQ8</accession>
<accession>B1AVR0</accession>
<accession>B6ECA1</accession>
<accession>E7ESE5</accession>
<accession>E7EUG9</accession>
<accession>P13931</accession>
<accession>P15942</accession>
<accession>P17626</accession>
<accession>Q0VAP5</accession>
<accession>Q0VAP6</accession>
<accession>Q14128</accession>
<accession>Q14876</accession>
<accession>Q16437</accession>
<accession>Q16442</accession>
<accession>Q16615</accession>
<accession>Q6S4Y3</accession>
<accession>Q7Z547</accession>
<accession>Q7Z548</accession>
<accession>Q7Z550</accession>
<accession>Q7Z552</accession>
<accession>Q9BXA4</accession>
<accession>Q9UE75</accession>
<accession>Q9UE76</accession>
<accession>Q9UQL1</accession>
<accession>Q9Y4J2</accession>
<feature type="signal peptide" evidence="5 9">
    <location>
        <begin position="1"/>
        <end position="23"/>
    </location>
</feature>
<feature type="chain" id="PRO_0000019277" description="Mucin-1">
    <location>
        <begin position="24"/>
        <end position="1255"/>
    </location>
</feature>
<feature type="chain" id="PRO_0000317446" description="Mucin-1 subunit alpha">
    <location>
        <begin position="24"/>
        <end position="1097"/>
    </location>
</feature>
<feature type="chain" id="PRO_0000317447" description="Mucin-1 subunit beta">
    <location>
        <begin position="1098"/>
        <end position="1255"/>
    </location>
</feature>
<feature type="topological domain" description="Extracellular" evidence="1">
    <location>
        <begin position="24"/>
        <end position="1158"/>
    </location>
</feature>
<feature type="transmembrane region" description="Helical" evidence="1">
    <location>
        <begin position="1159"/>
        <end position="1181"/>
    </location>
</feature>
<feature type="topological domain" description="Cytoplasmic" evidence="1">
    <location>
        <begin position="1182"/>
        <end position="1255"/>
    </location>
</feature>
<feature type="repeat" description="1; approximate" evidence="10">
    <location>
        <begin position="61"/>
        <end position="80"/>
    </location>
</feature>
<feature type="repeat" description="2; approximate" evidence="10">
    <location>
        <begin position="81"/>
        <end position="100"/>
    </location>
</feature>
<feature type="repeat" description="3" evidence="10">
    <location>
        <begin position="101"/>
        <end position="120"/>
    </location>
</feature>
<feature type="repeat" description="4" evidence="10">
    <location>
        <begin position="121"/>
        <end position="140"/>
    </location>
</feature>
<feature type="repeat" description="5" evidence="10">
    <location>
        <begin position="141"/>
        <end position="160"/>
    </location>
</feature>
<feature type="repeat" description="6" evidence="10">
    <location>
        <begin position="161"/>
        <end position="180"/>
    </location>
</feature>
<feature type="repeat" description="7" evidence="10">
    <location>
        <begin position="181"/>
        <end position="200"/>
    </location>
</feature>
<feature type="repeat" description="8" evidence="10">
    <location>
        <begin position="201"/>
        <end position="220"/>
    </location>
</feature>
<feature type="repeat" description="9" evidence="10">
    <location>
        <begin position="221"/>
        <end position="240"/>
    </location>
</feature>
<feature type="repeat" description="10" evidence="10">
    <location>
        <begin position="241"/>
        <end position="260"/>
    </location>
</feature>
<feature type="repeat" description="11" evidence="10">
    <location>
        <begin position="261"/>
        <end position="280"/>
    </location>
</feature>
<feature type="repeat" description="12" evidence="10">
    <location>
        <begin position="281"/>
        <end position="300"/>
    </location>
</feature>
<feature type="repeat" description="13" evidence="10">
    <location>
        <begin position="301"/>
        <end position="320"/>
    </location>
</feature>
<feature type="repeat" description="14" evidence="10">
    <location>
        <begin position="321"/>
        <end position="340"/>
    </location>
</feature>
<feature type="repeat" description="15" evidence="10">
    <location>
        <begin position="341"/>
        <end position="360"/>
    </location>
</feature>
<feature type="repeat" description="16" evidence="10">
    <location>
        <begin position="361"/>
        <end position="380"/>
    </location>
</feature>
<feature type="repeat" description="17" evidence="10">
    <location>
        <begin position="381"/>
        <end position="400"/>
    </location>
</feature>
<feature type="repeat" description="18" evidence="10">
    <location>
        <begin position="401"/>
        <end position="420"/>
    </location>
</feature>
<feature type="repeat" description="19" evidence="10">
    <location>
        <begin position="421"/>
        <end position="440"/>
    </location>
</feature>
<feature type="repeat" description="20" evidence="10">
    <location>
        <begin position="441"/>
        <end position="460"/>
    </location>
</feature>
<feature type="repeat" description="21" evidence="10">
    <location>
        <begin position="461"/>
        <end position="480"/>
    </location>
</feature>
<feature type="repeat" description="22" evidence="10">
    <location>
        <begin position="481"/>
        <end position="500"/>
    </location>
</feature>
<feature type="repeat" description="23" evidence="10">
    <location>
        <begin position="501"/>
        <end position="520"/>
    </location>
</feature>
<feature type="repeat" description="24" evidence="10">
    <location>
        <begin position="521"/>
        <end position="540"/>
    </location>
</feature>
<feature type="repeat" description="25" evidence="10">
    <location>
        <begin position="541"/>
        <end position="560"/>
    </location>
</feature>
<feature type="repeat" description="26" evidence="10">
    <location>
        <begin position="561"/>
        <end position="580"/>
    </location>
</feature>
<feature type="repeat" description="27" evidence="10">
    <location>
        <begin position="581"/>
        <end position="600"/>
    </location>
</feature>
<feature type="repeat" description="28" evidence="10">
    <location>
        <begin position="601"/>
        <end position="620"/>
    </location>
</feature>
<feature type="repeat" description="29" evidence="10">
    <location>
        <begin position="621"/>
        <end position="640"/>
    </location>
</feature>
<feature type="repeat" description="30" evidence="10">
    <location>
        <begin position="641"/>
        <end position="660"/>
    </location>
</feature>
<feature type="repeat" description="31" evidence="10">
    <location>
        <begin position="661"/>
        <end position="680"/>
    </location>
</feature>
<feature type="repeat" description="32" evidence="10">
    <location>
        <begin position="681"/>
        <end position="700"/>
    </location>
</feature>
<feature type="repeat" description="33" evidence="10">
    <location>
        <begin position="701"/>
        <end position="720"/>
    </location>
</feature>
<feature type="repeat" description="34" evidence="10">
    <location>
        <begin position="721"/>
        <end position="740"/>
    </location>
</feature>
<feature type="repeat" description="35" evidence="10">
    <location>
        <begin position="741"/>
        <end position="760"/>
    </location>
</feature>
<feature type="repeat" description="36" evidence="10">
    <location>
        <begin position="761"/>
        <end position="780"/>
    </location>
</feature>
<feature type="repeat" description="37" evidence="10">
    <location>
        <begin position="781"/>
        <end position="800"/>
    </location>
</feature>
<feature type="repeat" description="38" evidence="10">
    <location>
        <begin position="801"/>
        <end position="820"/>
    </location>
</feature>
<feature type="repeat" description="39" evidence="10">
    <location>
        <begin position="821"/>
        <end position="840"/>
    </location>
</feature>
<feature type="repeat" description="40" evidence="10">
    <location>
        <begin position="841"/>
        <end position="860"/>
    </location>
</feature>
<feature type="repeat" description="41" evidence="10">
    <location>
        <begin position="861"/>
        <end position="880"/>
    </location>
</feature>
<feature type="repeat" description="42" evidence="10">
    <location>
        <begin position="881"/>
        <end position="900"/>
    </location>
</feature>
<feature type="repeat" description="43" evidence="10">
    <location>
        <begin position="901"/>
        <end position="920"/>
    </location>
</feature>
<feature type="repeat" description="44" evidence="10">
    <location>
        <begin position="921"/>
        <end position="940"/>
    </location>
</feature>
<feature type="repeat" description="45" evidence="10">
    <location>
        <begin position="941"/>
        <end position="960"/>
    </location>
</feature>
<feature type="repeat" description="46; approximate" evidence="10">
    <location>
        <begin position="961"/>
        <end position="980"/>
    </location>
</feature>
<feature type="repeat" description="47; approximate" evidence="10">
    <location>
        <begin position="981"/>
        <end position="1000"/>
    </location>
</feature>
<feature type="repeat" description="48; approximate" evidence="10">
    <location>
        <begin position="1001"/>
        <end position="1020"/>
    </location>
</feature>
<feature type="domain" description="SEA" evidence="2">
    <location>
        <begin position="1039"/>
        <end position="1148"/>
    </location>
</feature>
<feature type="region of interest" description="Disordered" evidence="3">
    <location>
        <begin position="23"/>
        <end position="1033"/>
    </location>
</feature>
<feature type="region of interest" description="42 X 20 AA approximate tandem repeats of P-A-P-G-S-T-A-P-P-A-H-G-V-T-S-A-P-D-T-R">
    <location>
        <begin position="126"/>
        <end position="965"/>
    </location>
</feature>
<feature type="region of interest" description="Interaction with P53">
    <location>
        <begin position="1192"/>
        <end position="1228"/>
    </location>
</feature>
<feature type="region of interest" description="Disordered" evidence="3">
    <location>
        <begin position="1214"/>
        <end position="1237"/>
    </location>
</feature>
<feature type="region of interest" description="Required for interaction with GSK3B">
    <location>
        <begin position="1223"/>
        <end position="1230"/>
    </location>
</feature>
<feature type="region of interest" description="Required for interaction with beta- and gamma-catenins">
    <location>
        <begin position="1233"/>
        <end position="1241"/>
    </location>
</feature>
<feature type="short sequence motif" description="Interaction with GRB2">
    <location>
        <begin position="1203"/>
        <end position="1206"/>
    </location>
</feature>
<feature type="short sequence motif" description="Interaction with SRC and ESR1">
    <location>
        <begin position="1229"/>
        <end position="1232"/>
    </location>
</feature>
<feature type="short sequence motif" description="Required for interaction with AP1S2">
    <location>
        <begin position="1243"/>
        <end position="1246"/>
    </location>
</feature>
<feature type="compositionally biased region" description="Polar residues" evidence="3">
    <location>
        <begin position="38"/>
        <end position="54"/>
    </location>
</feature>
<feature type="compositionally biased region" description="Low complexity" evidence="3">
    <location>
        <begin position="55"/>
        <end position="75"/>
    </location>
</feature>
<feature type="compositionally biased region" description="Polar residues" evidence="3">
    <location>
        <begin position="90"/>
        <end position="102"/>
    </location>
</feature>
<feature type="compositionally biased region" description="Low complexity" evidence="3">
    <location>
        <begin position="960"/>
        <end position="970"/>
    </location>
</feature>
<feature type="compositionally biased region" description="Polar residues" evidence="3">
    <location>
        <begin position="971"/>
        <end position="993"/>
    </location>
</feature>
<feature type="compositionally biased region" description="Polar residues" evidence="3">
    <location>
        <begin position="1001"/>
        <end position="1033"/>
    </location>
</feature>
<feature type="site" description="Cleavage; by autolysis">
    <location>
        <begin position="1097"/>
        <end position="1098"/>
    </location>
</feature>
<feature type="modified residue" description="Phosphotyrosine; by PDGFR" evidence="17 31">
    <location>
        <position position="1203"/>
    </location>
</feature>
<feature type="modified residue" description="Phosphotyrosine" evidence="17">
    <location>
        <position position="1212"/>
    </location>
</feature>
<feature type="modified residue" description="Phosphotyrosine; by PDGFR" evidence="31">
    <location>
        <position position="1218"/>
    </location>
</feature>
<feature type="modified residue" description="Phosphothreonine; by PKC/PRKCD" evidence="12">
    <location>
        <position position="1224"/>
    </location>
</feature>
<feature type="modified residue" description="Phosphoserine; by GSK3-beta" evidence="43 64">
    <location>
        <position position="1227"/>
    </location>
</feature>
<feature type="modified residue" description="Phosphotyrosine; by CSK, EGFR and SRC" evidence="7 11 17 31">
    <location>
        <position position="1229"/>
    </location>
</feature>
<feature type="modified residue" description="Phosphotyrosine" evidence="17">
    <location>
        <position position="1243"/>
    </location>
</feature>
<feature type="lipid moiety-binding region" description="S-palmitoyl cysteine" evidence="27">
    <location>
        <position position="1184"/>
    </location>
</feature>
<feature type="lipid moiety-binding region" description="S-palmitoyl cysteine" evidence="27">
    <location>
        <position position="1186"/>
    </location>
</feature>
<feature type="glycosylation site" description="O-linked (GalNAc...) threonine" evidence="61 62">
    <location>
        <position position="131"/>
    </location>
</feature>
<feature type="glycosylation site" description="O-linked (GalNAc...) threonine" evidence="61 62">
    <location>
        <position position="139"/>
    </location>
</feature>
<feature type="glycosylation site" description="O-linked (GalNAc...) serine" evidence="1">
    <location>
        <position position="140"/>
    </location>
</feature>
<feature type="glycosylation site" description="O-linked (GalNAc...) threonine" evidence="1">
    <location>
        <position position="144"/>
    </location>
</feature>
<feature type="glycosylation site" description="N-linked (GlcNAc...) asparagine" evidence="1">
    <location>
        <position position="957"/>
    </location>
</feature>
<feature type="glycosylation site" description="N-linked (GlcNAc...) asparagine" evidence="1">
    <location>
        <position position="975"/>
    </location>
</feature>
<feature type="glycosylation site" description="N-linked (GlcNAc...) asparagine" evidence="1">
    <location>
        <position position="1029"/>
    </location>
</feature>
<feature type="glycosylation site" description="N-linked (GlcNAc...) asparagine" evidence="1">
    <location>
        <position position="1055"/>
    </location>
</feature>
<feature type="glycosylation site" description="N-linked (GlcNAc...) asparagine" evidence="1">
    <location>
        <position position="1133"/>
    </location>
</feature>
<feature type="splice variant" id="VSP_003281" description="In isoform 3." evidence="59">
    <location>
        <begin position="19"/>
        <end position="21"/>
    </location>
</feature>
<feature type="splice variant" id="VSP_003280" description="In isoform 2, isoform Y-LSP, isoform E2, isoform J13, isoform S2 and isoform T10." evidence="45 48 49 51 53 57">
    <original>T</original>
    <variation>TATTAPKPAT</variation>
    <location>
        <position position="19"/>
    </location>
</feature>
<feature type="splice variant" id="VSP_003282" description="In isoform 4." evidence="59">
    <location>
        <begin position="20"/>
        <end position="31"/>
    </location>
</feature>
<feature type="splice variant" id="VSP_047872" description="In isoform E2." evidence="48">
    <location>
        <begin position="54"/>
        <end position="1151"/>
    </location>
</feature>
<feature type="splice variant" id="VSP_047873" description="In isoform T10." evidence="48">
    <location>
        <begin position="54"/>
        <end position="1093"/>
    </location>
</feature>
<feature type="splice variant" id="VSP_003285" description="In isoform J13, isoform Y, isoform Y-LSP and isoform S2." evidence="45 47 48 52 54 57">
    <location>
        <begin position="54"/>
        <end position="1053"/>
    </location>
</feature>
<feature type="splice variant" id="VSP_003286" description="In isoform 8, isoform 9 and isoform M6." evidence="48 54 55 58">
    <location>
        <begin position="54"/>
        <end position="1035"/>
    </location>
</feature>
<feature type="splice variant" id="VSP_047575" description="In isoform ZD." evidence="46 48">
    <original>VSMTSSVLSSHSPGSGSSTTQGQDVTLAPATEPASGSAATWGQ</original>
    <variation>IPAPTTTKSCRETFLKCFCRFINKGVFWASPILSSGQDLWWYN</variation>
    <location>
        <begin position="54"/>
        <end position="96"/>
    </location>
</feature>
<feature type="splice variant" id="VSP_035046" description="In isoform F." evidence="56">
    <original>VSMTSSVLSSHSPGSGSSTTQGQDVTLAPATEPA</original>
    <variation>IPAPTTTKSCRETFLKCFCRFINKGVFWASPILS</variation>
    <location>
        <begin position="54"/>
        <end position="87"/>
    </location>
</feature>
<feature type="splice variant" id="VSP_003283" description="In isoform 6." evidence="48 54">
    <original>VSMTSSVLSSHSPGSGS</original>
    <variation>IPAPTTTKSCRETFLKW</variation>
    <location>
        <begin position="54"/>
        <end position="70"/>
    </location>
</feature>
<feature type="splice variant" id="VSP_003284" description="In isoform 6." evidence="48 54">
    <location>
        <begin position="71"/>
        <end position="1095"/>
    </location>
</feature>
<feature type="splice variant" id="VSP_035047" description="In isoform F." evidence="56">
    <location>
        <begin position="88"/>
        <end position="1139"/>
    </location>
</feature>
<feature type="splice variant" id="VSP_047576" description="In isoform ZD." evidence="46 48">
    <location>
        <begin position="97"/>
        <end position="1255"/>
    </location>
</feature>
<feature type="splice variant" id="VSP_003287" description="In isoform 9 and isoform S2." evidence="48 55 57">
    <location>
        <begin position="1077"/>
        <end position="1181"/>
    </location>
</feature>
<feature type="splice variant" id="VSP_003288" description="In isoform 5." evidence="50">
    <original>FLQIYKQGGFL</original>
    <variation>VSIGLSFPMLP</variation>
    <location>
        <begin position="1077"/>
        <end position="1087"/>
    </location>
</feature>
<feature type="splice variant" id="VSP_003289" description="In isoform 5." evidence="50">
    <location>
        <begin position="1088"/>
        <end position="1255"/>
    </location>
</feature>
<feature type="splice variant" id="VSP_046962" description="In isoform M6." evidence="48 58">
    <original>VSDVPFPFSAQSGAGVPGWGIALLVLVCVLVALAIVYLIA</original>
    <variation>GCLSVPPKELRAAGHLSSPGYLPSYERVPHLPHPWALCAP</variation>
    <location>
        <begin position="1141"/>
        <end position="1180"/>
    </location>
</feature>
<feature type="splice variant" id="VSP_046963" description="In isoform M6." evidence="48 58">
    <location>
        <begin position="1181"/>
        <end position="1255"/>
    </location>
</feature>
<feature type="splice variant" id="VSP_047874" description="In isoform J13." evidence="48">
    <original>VSAGNGGSSLSYTNPAVAATSANL</original>
    <variation>RQNGWSTMPRGALPEESQG</variation>
    <location>
        <begin position="1232"/>
        <end position="1255"/>
    </location>
</feature>
<feature type="sequence variant" id="VAR_019390" description="In dbSNP:rs1611770." evidence="22 33 44">
    <original>V</original>
    <variation>M</variation>
    <location>
        <position position="1117"/>
    </location>
</feature>
<feature type="sequence variant" id="VAR_019391" description="In dbSNP:rs11465207." evidence="44">
    <original>S</original>
    <variation>N</variation>
    <location>
        <position position="1142"/>
    </location>
</feature>
<feature type="mutagenesis site" description="Completely abrogates cleavage." evidence="24">
    <original>S</original>
    <variation>A</variation>
    <variation>D</variation>
    <variation>E</variation>
    <variation>F</variation>
    <variation>G</variation>
    <variation>H</variation>
    <variation>I</variation>
    <variation>K</variation>
    <variation>L</variation>
    <variation>M</variation>
    <variation>N</variation>
    <variation>P</variation>
    <variation>Q</variation>
    <variation>R</variation>
    <variation>V</variation>
    <variation>W</variation>
    <variation>Y</variation>
    <location>
        <position position="1098"/>
    </location>
</feature>
<feature type="mutagenesis site" description="Almost complete cleavage." evidence="24">
    <original>S</original>
    <variation>C</variation>
    <variation>T</variation>
    <location>
        <position position="1098"/>
    </location>
</feature>
<feature type="mutagenesis site" description="Greatly reduced formation of isoform 5/isoform Y complex." evidence="4">
    <original>D</original>
    <variation>A</variation>
    <location>
        <position position="1116"/>
    </location>
</feature>
<feature type="mutagenesis site" description="No effect on formation of isoform 5/isoform Y complex." evidence="4">
    <original>D</original>
    <variation>E</variation>
    <location>
        <position position="1116"/>
    </location>
</feature>
<feature type="mutagenesis site" description="S-palmitoylation reduced by 50%. Complete loss of palmitoylation, no effect on endocytosis, recycling inhibited and AP1S1 binding reduced by 30%; when associated with C-1186. Accumulates in intracellular compartments; when associated with C-1186 and N-1203." evidence="27">
    <original>C</original>
    <variation>A</variation>
    <location>
        <position position="1184"/>
    </location>
</feature>
<feature type="mutagenesis site" description="S-palmitoylation reduced by 50%. Complete loss of palmitoylation, no effect on endocytosis, recycling inhibited, and AP1S1 binding reduced by 30%; when associated with C-1184. Accumulates in intracellular compartments; when associated with C-1184 and N-1203." evidence="27">
    <original>C</original>
    <variation>A</variation>
    <location>
        <position position="1186"/>
    </location>
</feature>
<feature type="mutagenesis site" description="No nuclear targeting of HRG-stimulated MUC1 C-terminal nor JUP/gamma-catenin. No effect on interaction with JUP/gamma-catenin." evidence="16 27">
    <original>RRK</original>
    <variation>AAA</variation>
    <location>
        <begin position="1187"/>
        <end position="1189"/>
    </location>
</feature>
<feature type="mutagenesis site" description="No effect on palmitoylation." evidence="16 27">
    <original>RRK</original>
    <variation>QQQ</variation>
    <location>
        <begin position="1187"/>
        <end position="1189"/>
    </location>
</feature>
<feature type="mutagenesis site" description="No effect on EGFR-mediated phosphorylation." evidence="11 19">
    <original>Y</original>
    <variation>F</variation>
    <location>
        <position position="1191"/>
    </location>
</feature>
<feature type="mutagenesis site" description="No effect on endocytosis." evidence="11 19">
    <original>Y</original>
    <variation>N</variation>
    <location>
        <position position="1191"/>
    </location>
</feature>
<feature type="mutagenesis site" description="No effect on nuclear colocalization of MUC1CT and CTNNB1. No effect on in vitro PDFGR-induced cell invasiveness." evidence="11 19 27 31">
    <original>Y</original>
    <variation>E</variation>
    <location>
        <position position="1203"/>
    </location>
</feature>
<feature type="mutagenesis site" description="No effect on EGFR-mediated phosphorylation. No nuclear localization of MUC1CT. Reduced in vitro PDGFR-induced cell invasiveness." evidence="11 19 27 31">
    <original>Y</original>
    <variation>F</variation>
    <location>
        <position position="1203"/>
    </location>
</feature>
<feature type="mutagenesis site" description="Reduced endocytosis by 30%. Greatly reduced binding to AP1S2 and GRB2. Binding AP1S1 reduced by 25%. Reduced endocytosis by 77%; when associated with N-1243. Accumulates in intracellular compartments; when associated with C-1184 and C-1186." evidence="11 19 27 31">
    <original>Y</original>
    <variation>N</variation>
    <location>
        <position position="1203"/>
    </location>
</feature>
<feature type="mutagenesis site" description="Some reduction in EGFR-mediated phosphorylation." evidence="11">
    <original>Y</original>
    <variation>F</variation>
    <location>
        <position position="1209"/>
    </location>
</feature>
<feature type="mutagenesis site" description="No effect on EGFR-mediated phosphorylation. No nuclear colocalization of MUC1CT and CTNNB1." evidence="11 31">
    <original>Y</original>
    <variation>F</variation>
    <location>
        <position position="1218"/>
    </location>
</feature>
<feature type="mutagenesis site" description="No change in PRKCD- nor GSK3B-mediated phosphorylation." evidence="12 43">
    <original>S</original>
    <variation>A</variation>
    <location>
        <position position="1223"/>
    </location>
</feature>
<feature type="mutagenesis site" description="Loss of PRKCD-mediated phosphorylation. Decreased PRKCD binding. No increased binding to CTNNB1 in the presence of autophosphorylated PRKCD. Increases formation of E-cadherin/beta-catenin complex." evidence="12">
    <original>T</original>
    <variation>A</variation>
    <location>
        <position position="1224"/>
    </location>
</feature>
<feature type="mutagenesis site" description="No change in PRKCD-mediated phosphorylation. Loss of GSK3B-mediated phosphorylation. CTNNB1." evidence="12 43">
    <original>S</original>
    <variation>A</variation>
    <location>
        <position position="1227"/>
    </location>
</feature>
<feature type="mutagenesis site" description="Greatly reduced EGFR- and Src-mediated phosphorylation. No nuclear localization of MUC1CT. Reduced in vitro PDGFR-mediated phosphorylation. Decreased Src-binding." evidence="7 11 18 19">
    <original>Y</original>
    <variation>F</variation>
    <location>
        <position position="1229"/>
    </location>
</feature>
<feature type="mutagenesis site" description="No effect on endocytosis." evidence="7 11 18 19">
    <original>Y</original>
    <variation>N</variation>
    <location>
        <position position="1229"/>
    </location>
</feature>
<feature type="mutagenesis site" description="Reduces binding to AP1S2 by 33%. Greatly reduced binding to GRB2. Reduced endocytosis by 50%. Reduced endocytosis by 77%; when associated with N-1203." evidence="19">
    <original>Y</original>
    <variation>N</variation>
    <location>
        <position position="1243"/>
    </location>
</feature>
<feature type="sequence conflict" description="In Ref. 24; AAD14369." evidence="60" ref="24">
    <original>T</original>
    <variation>A</variation>
    <location>
        <position position="2"/>
    </location>
</feature>
<feature type="sequence conflict" description="In Ref. 22; AAA35757." evidence="60" ref="22">
    <original>P</original>
    <variation>Q</variation>
    <location>
        <position position="134"/>
    </location>
</feature>
<feature type="sequence conflict" description="In Ref. 22; AAA35757." evidence="60" ref="22">
    <original>P</original>
    <variation>Q</variation>
    <location>
        <position position="154"/>
    </location>
</feature>
<feature type="sequence conflict" description="In Ref. 2; AAA35805/AAA35807 and 3; AAA59876." evidence="60" ref="2 3">
    <original>S</original>
    <variation>T</variation>
    <location>
        <position position="1021"/>
    </location>
</feature>
<feature type="sequence conflict" description="In Ref. 11; AAP97018." evidence="60" ref="11">
    <original>D</original>
    <variation>G</variation>
    <location>
        <position position="1143"/>
    </location>
</feature>
<feature type="sequence conflict" description="In Ref. 13; AAK30142." evidence="60" ref="13">
    <original>Q</original>
    <variation>L</variation>
    <location>
        <position position="1193"/>
    </location>
</feature>
<feature type="sequence conflict" description="In Ref. 9; AAD10858." evidence="60" ref="9">
    <original>K</original>
    <variation>T</variation>
    <location>
        <position position="1231"/>
    </location>
</feature>
<feature type="sequence conflict" description="In Ref. 1; AAA60019." evidence="60" ref="1">
    <original>T</original>
    <variation>A</variation>
    <location>
        <position position="1251"/>
    </location>
</feature>
<feature type="strand" evidence="65">
    <location>
        <begin position="1042"/>
        <end position="1052"/>
    </location>
</feature>
<feature type="helix" evidence="65">
    <location>
        <begin position="1056"/>
        <end position="1059"/>
    </location>
</feature>
<feature type="helix" evidence="65">
    <location>
        <begin position="1064"/>
        <end position="1080"/>
    </location>
</feature>
<feature type="turn" evidence="65">
    <location>
        <begin position="1082"/>
        <end position="1085"/>
    </location>
</feature>
<feature type="strand" evidence="65">
    <location>
        <begin position="1086"/>
        <end position="1096"/>
    </location>
</feature>
<feature type="strand" evidence="65">
    <location>
        <begin position="1099"/>
        <end position="1107"/>
    </location>
</feature>
<feature type="turn" evidence="65">
    <location>
        <begin position="1109"/>
        <end position="1111"/>
    </location>
</feature>
<feature type="helix" evidence="65">
    <location>
        <begin position="1114"/>
        <end position="1132"/>
    </location>
</feature>
<feature type="strand" evidence="65">
    <location>
        <begin position="1136"/>
        <end position="1142"/>
    </location>
</feature>
<protein>
    <recommendedName>
        <fullName>Mucin-1</fullName>
        <shortName>MUC-1</shortName>
    </recommendedName>
    <alternativeName>
        <fullName>Breast carcinoma-associated antigen DF3</fullName>
    </alternativeName>
    <alternativeName>
        <fullName>Cancer antigen 15-3</fullName>
        <shortName>CA 15-3</shortName>
    </alternativeName>
    <alternativeName>
        <fullName>Carcinoma-associated mucin</fullName>
    </alternativeName>
    <alternativeName>
        <fullName>Episialin</fullName>
    </alternativeName>
    <alternativeName>
        <fullName>H23AG</fullName>
    </alternativeName>
    <alternativeName>
        <fullName>Krebs von den Lungen-6</fullName>
        <shortName>KL-6</shortName>
    </alternativeName>
    <alternativeName>
        <fullName>PEMT</fullName>
    </alternativeName>
    <alternativeName>
        <fullName>Peanut-reactive urinary mucin</fullName>
        <shortName>PUM</shortName>
    </alternativeName>
    <alternativeName>
        <fullName>Polymorphic epithelial mucin</fullName>
        <shortName>PEM</shortName>
    </alternativeName>
    <alternativeName>
        <fullName>Tumor-associated epithelial membrane antigen</fullName>
        <shortName>EMA</shortName>
    </alternativeName>
    <alternativeName>
        <fullName>Tumor-associated mucin</fullName>
    </alternativeName>
    <cdAntigenName>CD227</cdAntigenName>
    <component>
        <recommendedName>
            <fullName>Mucin-1 subunit alpha</fullName>
            <shortName>MUC1-NT</shortName>
            <shortName>MUC1-alpha</shortName>
        </recommendedName>
    </component>
    <component>
        <recommendedName>
            <fullName>Mucin-1 subunit beta</fullName>
            <shortName>MUC1-beta</shortName>
        </recommendedName>
        <alternativeName>
            <fullName>MUC1-CT</fullName>
        </alternativeName>
    </component>
</protein>
<sequence length="1255" mass="122102">MTPGTQSPFFLLLLLTVLTVVTGSGHASSTPGGEKETSATQRSSVPSSTEKNAVSMTSSVLSSHSPGSGSSTTQGQDVTLAPATEPASGSAATWGQDVTSVPVTRPALGSTTPPAHDVTSAPDNKPAPGSTAPPAHGVTSAPDTRPAPGSTAPPAHGVTSAPDTRPAPGSTAPPAHGVTSAPDTRPAPGSTAPPAHGVTSAPDTRPAPGSTAPPAHGVTSAPDTRPAPGSTAPPAHGVTSAPDTRPAPGSTAPPAHGVTSAPDTRPAPGSTAPPAHGVTSAPDTRPAPGSTAPPAHGVTSAPDTRPAPGSTAPPAHGVTSAPDTRPAPGSTAPPAHGVTSAPDTRPAPGSTAPPAHGVTSAPDTRPAPGSTAPPAHGVTSAPDTRPAPGSTAPPAHGVTSAPDTRPAPGSTAPPAHGVTSAPDTRPAPGSTAPPAHGVTSAPDTRPAPGSTAPPAHGVTSAPDTRPAPGSTAPPAHGVTSAPDTRPAPGSTAPPAHGVTSAPDTRPAPGSTAPPAHGVTSAPDTRPAPGSTAPPAHGVTSAPDTRPAPGSTAPPAHGVTSAPDTRPAPGSTAPPAHGVTSAPDTRPAPGSTAPPAHGVTSAPDTRPAPGSTAPPAHGVTSAPDTRPAPGSTAPPAHGVTSAPDTRPAPGSTAPPAHGVTSAPDTRPAPGSTAPPAHGVTSAPDTRPAPGSTAPPAHGVTSAPDTRPAPGSTAPPAHGVTSAPDTRPAPGSTAPPAHGVTSAPDTRPAPGSTAPPAHGVTSAPDTRPAPGSTAPPAHGVTSAPDTRPAPGSTAPPAHGVTSAPDTRPAPGSTAPPAHGVTSAPDTRPAPGSTAPPAHGVTSAPDTRPAPGSTAPPAHGVTSAPDTRPAPGSTAPPAHGVTSAPDTRPAPGSTAPPAHGVTSAPDTRPAPGSTAPPAHGVTSAPDTRPAPGSTAPPAHGVTSAPDNRPALGSTAPPVHNVTSASGSASGSASTLVHNGTSARATTTPASKSTPFSIPSHHSDTPTTLASHSTKTDASSTHHSSVPPLTSSNHSTSPQLSTGVSFFFLSFHISNLQFNSSLEDPSTDYYQELQRDISEMFLQIYKQGGFLGLSNIKFRPGSVVVQLTLAFREGTINVHDVETQFNQYKTEAASRYNLTISDVSVSDVPFPFSAQSGAGVPGWGIALLVLVCVLVALAIVYLIALAVCQCRRKNYGQLDIFPARDTYHPMSEYPTYHTHGRYVPPSSTDRSPYEKVSAGNGGSSLSYTNPAVAATSANL</sequence>
<keyword id="KW-0002">3D-structure</keyword>
<keyword id="KW-0025">Alternative splicing</keyword>
<keyword id="KW-0068">Autocatalytic cleavage</keyword>
<keyword id="KW-1003">Cell membrane</keyword>
<keyword id="KW-0963">Cytoplasm</keyword>
<keyword id="KW-0903">Direct protein sequencing</keyword>
<keyword id="KW-1015">Disulfide bond</keyword>
<keyword id="KW-0325">Glycoprotein</keyword>
<keyword id="KW-0449">Lipoprotein</keyword>
<keyword id="KW-0472">Membrane</keyword>
<keyword id="KW-0539">Nucleus</keyword>
<keyword id="KW-0564">Palmitate</keyword>
<keyword id="KW-0597">Phosphoprotein</keyword>
<keyword id="KW-1267">Proteomics identification</keyword>
<keyword id="KW-1185">Reference proteome</keyword>
<keyword id="KW-0677">Repeat</keyword>
<keyword id="KW-0964">Secreted</keyword>
<keyword id="KW-0732">Signal</keyword>
<keyword id="KW-0812">Transmembrane</keyword>
<keyword id="KW-1133">Transmembrane helix</keyword>
<keyword id="KW-0043">Tumor suppressor</keyword>
<name>MUC1_HUMAN</name>
<reference key="1">
    <citation type="journal article" date="1990" name="J. Biol. Chem.">
        <title>Cloning and sequencing of a human pancreatic tumor mucin cDNA.</title>
        <authorList>
            <person name="Lan M.S."/>
            <person name="Batra S.K."/>
            <person name="Qi W.-N."/>
            <person name="Metzgar R.S."/>
            <person name="Hollingsworth M.A."/>
        </authorList>
    </citation>
    <scope>NUCLEOTIDE SEQUENCE [MRNA] (ISOFORM 1)</scope>
    <source>
        <tissue>Pancreatic carcinoma</tissue>
    </source>
</reference>
<reference key="2">
    <citation type="journal article" date="1990" name="J. Biol. Chem.">
        <title>Episialin, a carcinoma-associated mucin, is generated by a polymorphic gene encoding splice variants with alternative amino termini.</title>
        <authorList>
            <person name="Ligtenberg M.J.L."/>
            <person name="Vos H.L."/>
            <person name="Gennissen A.M.C."/>
            <person name="Hilkens J."/>
        </authorList>
    </citation>
    <scope>NUCLEOTIDE SEQUENCE [MRNA] (ISOFORMS 1 AND 2)</scope>
</reference>
<reference key="3">
    <citation type="journal article" date="1990" name="J. Biol. Chem.">
        <title>Molecular cloning and expression of human tumor-associated polymorphic epithelial mucin.</title>
        <authorList>
            <person name="Gendler S.J."/>
            <person name="Lancaster C.A."/>
            <person name="Taylor-Papadimitriou J."/>
            <person name="Duhig T."/>
            <person name="Peat N."/>
            <person name="Burchell J."/>
            <person name="Pemberton L."/>
            <person name="Lalani E.-N."/>
            <person name="Wilson D."/>
        </authorList>
    </citation>
    <scope>NUCLEOTIDE SEQUENCE [MRNA] (ISOFORM 1)</scope>
    <source>
        <tissue>Mammary carcinoma</tissue>
    </source>
</reference>
<reference key="4">
    <citation type="journal article" date="1990" name="Biochem. Biophys. Res. Commun.">
        <title>Structure and expression of the human polymorphic epithelial mucin gene: an expressed VNTR unit.</title>
        <authorList>
            <person name="Lancaster C.A."/>
            <person name="Peat N."/>
            <person name="Duhig T."/>
            <person name="Wilson D."/>
            <person name="Taylor-Papadimitriou J."/>
            <person name="Gendler S.J."/>
        </authorList>
    </citation>
    <scope>NUCLEOTIDE SEQUENCE [GENOMIC DNA] (ISOFORM 1)</scope>
</reference>
<reference key="5">
    <citation type="journal article" date="1990" name="Eur. J. Biochem.">
        <title>Human epithelial tumor antigen cDNA sequences. Differential splicing may generate multiple protein forms.</title>
        <authorList>
            <person name="Wreschner D.H."/>
            <person name="Hareuveni M."/>
            <person name="Tsarfaty I."/>
            <person name="Smorodinsky N."/>
            <person name="Horev J."/>
            <person name="Zaretsky J."/>
            <person name="Kotkes P."/>
            <person name="Weiss M."/>
            <person name="Lathe R."/>
            <person name="Dion A."/>
            <person name="Keydar I."/>
        </authorList>
    </citation>
    <scope>NUCLEOTIDE SEQUENCE [MRNA] (ISOFORM 5)</scope>
    <source>
        <tissue>Mammary carcinoma</tissue>
    </source>
</reference>
<reference key="6">
    <citation type="journal article" date="1990" name="Eur. J. Biochem.">
        <title>A transcribed gene, containing a variable number of tandem repeats, codes for a human epithelial tumor antigen. cDNA cloning, expression of the transfected gene and over-expression in breast cancer tissue.</title>
        <authorList>
            <person name="Hareuveni M."/>
            <person name="Tsarfaty I."/>
            <person name="Zaretsky J."/>
            <person name="Kotkes P."/>
            <person name="Horev J."/>
            <person name="Zrihan S."/>
            <person name="Weiss M."/>
            <person name="Green S."/>
            <person name="Lathe R."/>
            <person name="Keydar I."/>
            <person name="Wreschner D.H."/>
        </authorList>
    </citation>
    <scope>NUCLEOTIDE SEQUENCE [MRNA]</scope>
    <source>
        <tissue>Mammary carcinoma</tissue>
    </source>
</reference>
<reference key="7">
    <citation type="journal article" date="1990" name="Gene">
        <title>Isolation and characterization of an expressed hypervariable gene coding for a breast-cancer-associated antigen.</title>
        <authorList>
            <person name="Tsarfaty I."/>
            <person name="Hareuveni M."/>
            <person name="Horev J."/>
            <person name="Zaretsky J."/>
            <person name="Weiss M."/>
            <person name="Jeltsch J.-M."/>
            <person name="Garnier J.-M."/>
            <person name="Lathe R."/>
            <person name="Keydar I."/>
            <person name="Wreschner D.H."/>
        </authorList>
    </citation>
    <scope>NUCLEOTIDE SEQUENCE [GENOMIC DNA] (ISOFORM 1)</scope>
</reference>
<reference key="8">
    <citation type="journal article" date="1994" name="Eur. J. Biochem.">
        <title>Characterization and molecular cloning of a novel MUC1 protein, devoid of tandem repeats, expressed in human breast cancer tissue.</title>
        <authorList>
            <person name="Zrihan-Licht S."/>
            <person name="Vos H.L."/>
            <person name="Baruch A."/>
            <person name="Elroy-Stein O."/>
            <person name="Sagiv D."/>
            <person name="Keydar I."/>
            <person name="Hilkens J."/>
            <person name="Wreschner D.H."/>
        </authorList>
    </citation>
    <scope>NUCLEOTIDE SEQUENCE [MRNA] (ISOFORM Y)</scope>
</reference>
<reference key="9">
    <citation type="journal article" date="1997" name="Int. J. Cancer">
        <title>Comparison of MUC-1 mucin expression in epithelial and non-epithelial cancer cell lines and demonstration of a new short variant form (MUC-1/Z).</title>
        <authorList>
            <person name="Oosterkamp H.M."/>
            <person name="Scheiner L."/>
            <person name="Stefanova M.C."/>
            <person name="Lloyd K.O."/>
            <person name="Finstad C.L."/>
        </authorList>
    </citation>
    <scope>NUCLEOTIDE SEQUENCE [MRNA] (ISOFORMS 6; Y AND 8)</scope>
    <scope>TISSUE SPECIFICITY</scope>
</reference>
<reference key="10">
    <citation type="journal article" date="2005" name="J. Biol. Chem.">
        <title>A novel protein derived from the MUC1 gene by alternative splicing and frameshifting.</title>
        <authorList>
            <person name="Levitin F."/>
            <person name="Baruch A."/>
            <person name="Weiss M."/>
            <person name="Stiegman K."/>
            <person name="Hartmann M.L."/>
            <person name="Yoeli-Lerner M."/>
            <person name="Ziv R."/>
            <person name="Zrihan-Licht S."/>
            <person name="Shina S."/>
            <person name="Gat A."/>
            <person name="Lifschitz B."/>
            <person name="Simha M."/>
            <person name="Stadler Y."/>
            <person name="Cholostoy A."/>
            <person name="Gil B."/>
            <person name="Greaves D."/>
            <person name="Keydar I."/>
            <person name="Zaretsky J."/>
            <person name="Smorodinsky N."/>
            <person name="Wreschner D.H."/>
        </authorList>
    </citation>
    <scope>NUCLEOTIDE SEQUENCE [MRNA] (ISOFORM ZD)</scope>
</reference>
<reference key="11">
    <citation type="journal article" date="2013" name="Cancer Immunol. Immunother.">
        <title>Human mucin MUC1 RNA undergoes different types of alternative splicing resulting in multiple isoforms.</title>
        <authorList>
            <person name="Zhang L."/>
            <person name="Vlad A."/>
            <person name="Milcarek C."/>
            <person name="Finn O.J."/>
        </authorList>
    </citation>
    <scope>NUCLEOTIDE SEQUENCE [MRNA] (ISOFORMS 6; E2; J13; M6; S2; T10; Y-LSP AND ZD)</scope>
    <scope>ALTERNATIVE SPLICING</scope>
    <scope>VARIANT MET-1117</scope>
</reference>
<reference key="12">
    <citation type="submission" date="2001-02" db="EMBL/GenBank/DDBJ databases">
        <title>Cloning of a new potential secreted short variant form of MUC1 mucin in epithelial cancer cell line.</title>
        <authorList>
            <person name="Zhang L.X."/>
            <person name="Li C.H."/>
            <person name="Sun L.Y."/>
            <person name="Yue W."/>
        </authorList>
    </citation>
    <scope>NUCLEOTIDE SEQUENCE [MRNA] (ISOFORM 9)</scope>
    <source>
        <tissue>Carcinoma</tissue>
    </source>
</reference>
<reference key="13">
    <citation type="journal article" date="2003" name="Sheng Wu Gong Cheng Xue Bao">
        <title>Soluble expression of peptide containing MUC1/Y-specific epitope in Escherichia coli and preparation of the antibody.</title>
        <authorList>
            <person name="Zhang L.X."/>
            <person name="Li C.H."/>
            <person name="Sun L.Y."/>
            <person name="Wang M."/>
            <person name="Lu H.J."/>
        </authorList>
    </citation>
    <scope>NUCLEOTIDE SEQUENCE [MRNA] (ISOFORM Y)</scope>
    <scope>VARIANT MET-1117</scope>
    <source>
        <tissue>Cervix carcinoma</tissue>
    </source>
</reference>
<reference key="14">
    <citation type="submission" date="2003-06" db="EMBL/GenBank/DDBJ databases">
        <title>Cloning of a new MUC1 short variant mRNA F from HeLa cells.</title>
        <authorList>
            <person name="Zhang L.X."/>
            <person name="Lu H.J."/>
        </authorList>
    </citation>
    <scope>NUCLEOTIDE SEQUENCE [MRNA] (ISOFORM F)</scope>
</reference>
<reference key="15">
    <citation type="submission" date="2003-06" db="EMBL/GenBank/DDBJ databases">
        <title>Cloning of a new MUC1 short variant mRNA S2 from HeLa cells.</title>
        <authorList>
            <person name="Zhang L.X."/>
            <person name="Lu H.J."/>
        </authorList>
    </citation>
    <scope>NUCLEOTIDE SEQUENCE [MRNA] (ISOFORM S2)</scope>
</reference>
<reference key="16">
    <citation type="submission" date="2007-06" db="EMBL/GenBank/DDBJ databases">
        <title>Isolation of MUC1 isoforms from MCF7 cells.</title>
        <authorList>
            <person name="Zhang L."/>
            <person name="Finn O.J."/>
        </authorList>
    </citation>
    <scope>NUCLEOTIDE SEQUENCE [MRNA] (ISOFORM M6)</scope>
</reference>
<reference key="17">
    <citation type="submission" date="2003-11" db="EMBL/GenBank/DDBJ databases">
        <authorList>
            <consortium name="NIEHS SNPs program"/>
        </authorList>
    </citation>
    <scope>NUCLEOTIDE SEQUENCE [GENOMIC DNA]</scope>
    <scope>VARIANTS MET-1117 AND ASN-1142</scope>
</reference>
<reference key="18">
    <citation type="journal article" date="2006" name="Nature">
        <title>The DNA sequence and biological annotation of human chromosome 1.</title>
        <authorList>
            <person name="Gregory S.G."/>
            <person name="Barlow K.F."/>
            <person name="McLay K.E."/>
            <person name="Kaul R."/>
            <person name="Swarbreck D."/>
            <person name="Dunham A."/>
            <person name="Scott C.E."/>
            <person name="Howe K.L."/>
            <person name="Woodfine K."/>
            <person name="Spencer C.C.A."/>
            <person name="Jones M.C."/>
            <person name="Gillson C."/>
            <person name="Searle S."/>
            <person name="Zhou Y."/>
            <person name="Kokocinski F."/>
            <person name="McDonald L."/>
            <person name="Evans R."/>
            <person name="Phillips K."/>
            <person name="Atkinson A."/>
            <person name="Cooper R."/>
            <person name="Jones C."/>
            <person name="Hall R.E."/>
            <person name="Andrews T.D."/>
            <person name="Lloyd C."/>
            <person name="Ainscough R."/>
            <person name="Almeida J.P."/>
            <person name="Ambrose K.D."/>
            <person name="Anderson F."/>
            <person name="Andrew R.W."/>
            <person name="Ashwell R.I.S."/>
            <person name="Aubin K."/>
            <person name="Babbage A.K."/>
            <person name="Bagguley C.L."/>
            <person name="Bailey J."/>
            <person name="Beasley H."/>
            <person name="Bethel G."/>
            <person name="Bird C.P."/>
            <person name="Bray-Allen S."/>
            <person name="Brown J.Y."/>
            <person name="Brown A.J."/>
            <person name="Buckley D."/>
            <person name="Burton J."/>
            <person name="Bye J."/>
            <person name="Carder C."/>
            <person name="Chapman J.C."/>
            <person name="Clark S.Y."/>
            <person name="Clarke G."/>
            <person name="Clee C."/>
            <person name="Cobley V."/>
            <person name="Collier R.E."/>
            <person name="Corby N."/>
            <person name="Coville G.J."/>
            <person name="Davies J."/>
            <person name="Deadman R."/>
            <person name="Dunn M."/>
            <person name="Earthrowl M."/>
            <person name="Ellington A.G."/>
            <person name="Errington H."/>
            <person name="Frankish A."/>
            <person name="Frankland J."/>
            <person name="French L."/>
            <person name="Garner P."/>
            <person name="Garnett J."/>
            <person name="Gay L."/>
            <person name="Ghori M.R.J."/>
            <person name="Gibson R."/>
            <person name="Gilby L.M."/>
            <person name="Gillett W."/>
            <person name="Glithero R.J."/>
            <person name="Grafham D.V."/>
            <person name="Griffiths C."/>
            <person name="Griffiths-Jones S."/>
            <person name="Grocock R."/>
            <person name="Hammond S."/>
            <person name="Harrison E.S.I."/>
            <person name="Hart E."/>
            <person name="Haugen E."/>
            <person name="Heath P.D."/>
            <person name="Holmes S."/>
            <person name="Holt K."/>
            <person name="Howden P.J."/>
            <person name="Hunt A.R."/>
            <person name="Hunt S.E."/>
            <person name="Hunter G."/>
            <person name="Isherwood J."/>
            <person name="James R."/>
            <person name="Johnson C."/>
            <person name="Johnson D."/>
            <person name="Joy A."/>
            <person name="Kay M."/>
            <person name="Kershaw J.K."/>
            <person name="Kibukawa M."/>
            <person name="Kimberley A.M."/>
            <person name="King A."/>
            <person name="Knights A.J."/>
            <person name="Lad H."/>
            <person name="Laird G."/>
            <person name="Lawlor S."/>
            <person name="Leongamornlert D.A."/>
            <person name="Lloyd D.M."/>
            <person name="Loveland J."/>
            <person name="Lovell J."/>
            <person name="Lush M.J."/>
            <person name="Lyne R."/>
            <person name="Martin S."/>
            <person name="Mashreghi-Mohammadi M."/>
            <person name="Matthews L."/>
            <person name="Matthews N.S.W."/>
            <person name="McLaren S."/>
            <person name="Milne S."/>
            <person name="Mistry S."/>
            <person name="Moore M.J.F."/>
            <person name="Nickerson T."/>
            <person name="O'Dell C.N."/>
            <person name="Oliver K."/>
            <person name="Palmeiri A."/>
            <person name="Palmer S.A."/>
            <person name="Parker A."/>
            <person name="Patel D."/>
            <person name="Pearce A.V."/>
            <person name="Peck A.I."/>
            <person name="Pelan S."/>
            <person name="Phelps K."/>
            <person name="Phillimore B.J."/>
            <person name="Plumb R."/>
            <person name="Rajan J."/>
            <person name="Raymond C."/>
            <person name="Rouse G."/>
            <person name="Saenphimmachak C."/>
            <person name="Sehra H.K."/>
            <person name="Sheridan E."/>
            <person name="Shownkeen R."/>
            <person name="Sims S."/>
            <person name="Skuce C.D."/>
            <person name="Smith M."/>
            <person name="Steward C."/>
            <person name="Subramanian S."/>
            <person name="Sycamore N."/>
            <person name="Tracey A."/>
            <person name="Tromans A."/>
            <person name="Van Helmond Z."/>
            <person name="Wall M."/>
            <person name="Wallis J.M."/>
            <person name="White S."/>
            <person name="Whitehead S.L."/>
            <person name="Wilkinson J.E."/>
            <person name="Willey D.L."/>
            <person name="Williams H."/>
            <person name="Wilming L."/>
            <person name="Wray P.W."/>
            <person name="Wu Z."/>
            <person name="Coulson A."/>
            <person name="Vaudin M."/>
            <person name="Sulston J.E."/>
            <person name="Durbin R.M."/>
            <person name="Hubbard T."/>
            <person name="Wooster R."/>
            <person name="Dunham I."/>
            <person name="Carter N.P."/>
            <person name="McVean G."/>
            <person name="Ross M.T."/>
            <person name="Harrow J."/>
            <person name="Olson M.V."/>
            <person name="Beck S."/>
            <person name="Rogers J."/>
            <person name="Bentley D.R."/>
        </authorList>
    </citation>
    <scope>NUCLEOTIDE SEQUENCE [LARGE SCALE GENOMIC DNA]</scope>
</reference>
<reference key="19">
    <citation type="submission" date="2005-09" db="EMBL/GenBank/DDBJ databases">
        <authorList>
            <person name="Mural R.J."/>
            <person name="Istrail S."/>
            <person name="Sutton G."/>
            <person name="Florea L."/>
            <person name="Halpern A.L."/>
            <person name="Mobarry C.M."/>
            <person name="Lippert R."/>
            <person name="Walenz B."/>
            <person name="Shatkay H."/>
            <person name="Dew I."/>
            <person name="Miller J.R."/>
            <person name="Flanigan M.J."/>
            <person name="Edwards N.J."/>
            <person name="Bolanos R."/>
            <person name="Fasulo D."/>
            <person name="Halldorsson B.V."/>
            <person name="Hannenhalli S."/>
            <person name="Turner R."/>
            <person name="Yooseph S."/>
            <person name="Lu F."/>
            <person name="Nusskern D.R."/>
            <person name="Shue B.C."/>
            <person name="Zheng X.H."/>
            <person name="Zhong F."/>
            <person name="Delcher A.L."/>
            <person name="Huson D.H."/>
            <person name="Kravitz S.A."/>
            <person name="Mouchard L."/>
            <person name="Reinert K."/>
            <person name="Remington K.A."/>
            <person name="Clark A.G."/>
            <person name="Waterman M.S."/>
            <person name="Eichler E.E."/>
            <person name="Adams M.D."/>
            <person name="Hunkapiller M.W."/>
            <person name="Myers E.W."/>
            <person name="Venter J.C."/>
        </authorList>
    </citation>
    <scope>NUCLEOTIDE SEQUENCE [LARGE SCALE GENOMIC DNA]</scope>
</reference>
<reference key="20">
    <citation type="journal article" date="2004" name="Genome Res.">
        <title>The status, quality, and expansion of the NIH full-length cDNA project: the Mammalian Gene Collection (MGC).</title>
        <authorList>
            <consortium name="The MGC Project Team"/>
        </authorList>
    </citation>
    <scope>NUCLEOTIDE SEQUENCE [LARGE SCALE MRNA] (ISOFORMS Y AND Y-LSP)</scope>
</reference>
<reference key="21">
    <citation type="journal article" date="1988" name="J. Biol. Chem.">
        <title>A highly immunogenic region of a human polymorphic epithelial mucin expressed by carcinomas is made up of tandem repeats.</title>
        <authorList>
            <person name="Gendler S.J."/>
            <person name="Taylor-Papadimitriou J."/>
            <person name="Duhig T."/>
            <person name="Rothbard J."/>
            <person name="Burchell J."/>
        </authorList>
    </citation>
    <scope>PARTIAL NUCLEOTIDE SEQUENCE [MRNA]</scope>
</reference>
<reference key="22">
    <citation type="journal article" date="1989" name="Biochem. Biophys. Res. Commun.">
        <title>Sequence analysis of the 5' region of the human DF3 breast carcinoma-associated antigen gene.</title>
        <authorList>
            <person name="Abe M."/>
            <person name="Siddiqui J."/>
            <person name="Kufe D."/>
        </authorList>
    </citation>
    <scope>NUCLEOTIDE SEQUENCE [MRNA] OF 1-160 (ISOFORM 2)</scope>
</reference>
<reference key="23">
    <citation type="journal article" date="1996" name="Int. J. Cancer">
        <title>Preoperative diagnosis of thyroid papillary carcinoma by reverse transcriptase polymerase chain reaction of the MUC1 gene.</title>
        <authorList>
            <person name="Weiss M."/>
            <person name="Baruch A."/>
            <person name="Keydar I."/>
            <person name="Wreschner D.H."/>
        </authorList>
    </citation>
    <scope>NUCLEOTIDE SEQUENCE [MRNA] OF 1-109 (ISOFORM 2)</scope>
    <source>
        <tissue>Thyroid</tissue>
    </source>
</reference>
<reference key="24">
    <citation type="journal article" date="1996" name="Oncology">
        <title>Mucin mRNA expression in lung adenocarcinoma cell lines and tissues.</title>
        <authorList>
            <person name="Yu C.J."/>
            <person name="Yang P.C."/>
            <person name="Shew J.Y."/>
            <person name="Hong T.M."/>
            <person name="Yang S.C."/>
            <person name="Lee Y.C."/>
            <person name="Lee L.N."/>
            <person name="Luh K.T."/>
            <person name="Wu C.W."/>
        </authorList>
    </citation>
    <scope>NUCLEOTIDE SEQUENCE [MRNA] OF 1-89</scope>
    <source>
        <tissue>Lung</tissue>
    </source>
</reference>
<reference key="25">
    <citation type="submission" date="1992-10" db="EMBL/GenBank/DDBJ databases">
        <authorList>
            <person name="Buluwela L."/>
            <person name="Liu Q."/>
            <person name="Luqmani Y.A."/>
            <person name="Gomm J.J."/>
            <person name="Coombes R.C."/>
        </authorList>
    </citation>
    <scope>NUCLEOTIDE SEQUENCE [MRNA] OF 1-46 (ISOFORMS 3 AND 4)</scope>
    <source>
        <tissue>Mammary carcinoma</tissue>
    </source>
</reference>
<reference key="26">
    <citation type="journal article" date="2001" name="Biochem. Biophys. Res. Commun.">
        <title>Identification of MUC1 proteolytic cleavage sites in vivo.</title>
        <authorList>
            <person name="Parry S."/>
            <person name="Silverman H.S."/>
            <person name="McDermott K."/>
            <person name="Willis A."/>
            <person name="Hollingsworth M.A."/>
            <person name="Harris A."/>
        </authorList>
    </citation>
    <scope>PROTEIN SEQUENCE OF 24-33; 28-37 AND 1098-1107</scope>
    <scope>PROTEOLYTIC PROCESSING</scope>
</reference>
<reference key="27">
    <citation type="journal article" date="2005" name="J. Biol. Chem.">
        <title>The MUC1 SEA module is a self-cleaving domain.</title>
        <authorList>
            <person name="Levitin F."/>
            <person name="Stern O."/>
            <person name="Weiss M."/>
            <person name="Gil-Henn C."/>
            <person name="Ziv R."/>
            <person name="Prokocimer Z."/>
            <person name="Smorodinsky N.I."/>
            <person name="Rubinstein D.B."/>
            <person name="Wreschner D.H."/>
        </authorList>
    </citation>
    <scope>PROTEIN SEQUENCE OF 1098-1111</scope>
    <scope>PROTEOLYTIC CLEAVAGE</scope>
    <scope>MUTAGENESIS OF SER-1098</scope>
</reference>
<reference key="28">
    <citation type="journal article" date="1999" name="J. Biol. Chem.">
        <title>High density O-glycosylation on tandem repeat peptide from secretory MUC1 of T47D breast cancer cells.</title>
        <authorList>
            <person name="Mueller S."/>
            <person name="Alving K."/>
            <person name="Peter-Katalinic J."/>
            <person name="Zachara N."/>
            <person name="Gooley A.A."/>
            <person name="Hanisch F.-G."/>
        </authorList>
    </citation>
    <scope>PROTEIN SEQUENCE OF TANDEM REPEAT</scope>
    <scope>IDENTIFICATION BY MASS SPECTROMETRY</scope>
    <scope>GLYCOSYLATION</scope>
</reference>
<reference key="29">
    <citation type="journal article" date="1994" name="FEBS Lett.">
        <title>Tyrosine phosphorylation of the MUC1 breast cancer membrane proteins. Cytokine receptor-like molecules.</title>
        <authorList>
            <person name="Zrihan-Licht S."/>
            <person name="Baruch A."/>
            <person name="Elroy-Stein O."/>
            <person name="Keydar I."/>
            <person name="Wreschner D.H."/>
        </authorList>
    </citation>
    <scope>PHOSPHORYLATION</scope>
</reference>
<reference key="30">
    <citation type="journal article" date="1995" name="Cancer Res.">
        <title>Association of the DF3/MUC1 breast cancer antigen with Grb2 and the Sos/Ras exchange protein.</title>
        <authorList>
            <person name="Pandey P."/>
            <person name="Kharbanda S."/>
            <person name="Kufe D."/>
        </authorList>
    </citation>
    <scope>IDENTIFICATION IN A COMPLEX WITH SOS1 AND GRB2</scope>
    <scope>INTERACTION WITH GRB2 AND SOS1</scope>
    <scope>PHOSPHORYLATION</scope>
</reference>
<reference key="31">
    <citation type="journal article" date="1995" name="Eur. J. Biochem.">
        <title>Studies on the order and site specificity of GalNAc transfer to MUC1 tandem repeats by UDP-GalNAc: polypeptide N-acetylgalactosaminyltransferase from milk or mammary carcinoma cells.</title>
        <authorList>
            <person name="Stadie T.R."/>
            <person name="Chai W."/>
            <person name="Lawson A.M."/>
            <person name="Byfield P.G."/>
            <person name="Hanisch F.G."/>
        </authorList>
    </citation>
    <scope>GLYCOSYLATION AT THR-131 AND THR-139</scope>
    <scope>IDENTIFICATION BY MASS SPECTROMETRY</scope>
</reference>
<reference key="32">
    <citation type="journal article" date="1997" name="J. Biol. Chem.">
        <title>Interaction of the DF3/MUC1 breast carcinoma-associated antigen and beta-catenin in cell adhesion.</title>
        <authorList>
            <person name="Yamamoto M."/>
            <person name="Bharti A."/>
            <person name="Li Y."/>
            <person name="Kufe D."/>
        </authorList>
    </citation>
    <scope>INTERACTION WITH CTNNB1 AND JUP</scope>
    <scope>FUNCTION</scope>
</reference>
<reference key="33">
    <citation type="journal article" date="1997" name="J. Biol. Chem.">
        <title>Localization of O-glycosylation sites on glycopeptide fragments from lactation-associated MUC1. All putative sites within the tandem repeat are glycosylation targets in vivo.</title>
        <authorList>
            <person name="Mueller S."/>
            <person name="Goletz S."/>
            <person name="Packer N.H."/>
            <person name="Gooley A.A."/>
            <person name="Lawson A.M."/>
            <person name="Hanisch F.-G."/>
        </authorList>
    </citation>
    <scope>GLYCOSYLATION</scope>
</reference>
<reference key="34">
    <citation type="journal article" date="1998" name="Gut">
        <title>Developmental expression of mucin genes in the human gastrointestinal system.</title>
        <authorList>
            <person name="Reid C.J."/>
            <person name="Harris A."/>
        </authorList>
    </citation>
    <scope>DEVELOPMENTAL STAGE</scope>
</reference>
<reference key="35">
    <citation type="journal article" date="1998" name="J. Mass Spectrom.">
        <title>Localization of O-glycosylation sites of MUC1 tandem repeats by QTOF ESI mass spectrometry.</title>
        <authorList>
            <person name="Hanisch F.G."/>
            <person name="Green B.N."/>
            <person name="Bateman R."/>
            <person name="Peter-Katalinic J."/>
        </authorList>
    </citation>
    <scope>GLYCOSYLATION AT THR-131 AND THR-139</scope>
    <scope>IDENTIFICATION BY MASS SPECTROMETRY</scope>
</reference>
<reference key="36">
    <citation type="journal article" date="1998" name="Mol. Cell. Biol.">
        <title>Interaction of glycogen synthase kinase 3beta with the DF3/MUC1 carcinoma-associated antigen and beta-catenin.</title>
        <authorList>
            <person name="Li Y."/>
            <person name="Bharti A."/>
            <person name="Chen D."/>
            <person name="Gong J."/>
            <person name="Kufe D."/>
        </authorList>
    </citation>
    <scope>INTERACTION WITH GSK3B AND CTNNB1</scope>
    <scope>PHOSPHORYLATION AT SER-1227</scope>
    <scope>MUTAGENESIS OF SER-1223 AND SER-1227</scope>
</reference>
<reference key="37">
    <citation type="journal article" date="1999" name="Cancer Res.">
        <title>The breast cancer-associated MUC1 gene generates both a receptor and its cognate binding protein.</title>
        <authorList>
            <person name="Baruch A."/>
            <person name="Hartmann M.-L."/>
            <person name="Yoeli M."/>
            <person name="Adereth Y."/>
            <person name="Greenstein S."/>
            <person name="Stadler Y."/>
            <person name="Skornik Y."/>
            <person name="Zaretsky J."/>
            <person name="Smorodinsky N.I."/>
            <person name="Keydar I."/>
            <person name="Wreschner D.H."/>
        </authorList>
    </citation>
    <scope>CHARACTERIZATION (ISOFORM Y)</scope>
    <scope>MUTAGENESIS OF ASP-1116</scope>
</reference>
<reference key="38">
    <citation type="journal article" date="2001" name="Digestion 63 Suppl.">
        <title>MUC1 mucin core protein binds to the domain 1 of ICAM-1.</title>
        <authorList>
            <person name="Hayashi T."/>
            <person name="Takahashi T."/>
            <person name="Motoya S."/>
            <person name="Ishida T."/>
            <person name="Itoh F."/>
            <person name="Adachi M."/>
            <person name="Hinoda Y."/>
            <person name="Imai K."/>
        </authorList>
    </citation>
    <scope>INTERACTION WITH ICAM1</scope>
</reference>
<reference key="39">
    <citation type="journal article" date="2001" name="J. Histochem. Cytochem.">
        <title>Mucin MUC1 is seen in cell surface protrusions together with ezrin in immunoelectron tomography and is concentrated at tips of filopodial protrusions in MCF-7 breast carcinoma cells.</title>
        <authorList>
            <person name="Bennett R. Jr."/>
            <person name="Jaervelae T."/>
            <person name="Engelhardt P."/>
            <person name="Kostamovaara L."/>
            <person name="Sparks P."/>
            <person name="Carpen O."/>
            <person name="Turunen O."/>
            <person name="Vaheri A."/>
        </authorList>
    </citation>
    <scope>SUBCELLULAR LOCATION</scope>
</reference>
<reference key="40">
    <citation type="journal article" date="2001" name="J. Biol. Chem.">
        <title>The c-Src tyrosine kinase regulates signaling of the human DF3/MUC1 carcinoma-associated antigen with GSK3 beta and beta-catenin.</title>
        <authorList>
            <person name="Li Y."/>
            <person name="Kuwahara H."/>
            <person name="Ren J."/>
            <person name="Wen G."/>
            <person name="Kufe D."/>
        </authorList>
    </citation>
    <scope>INTERACTION WITH SRC; GSK3B AND CTNNB1</scope>
    <scope>PHOSPHORYLATION AT TYR-1229</scope>
    <scope>MUTAGENESIS OF TYR-1229</scope>
</reference>
<reference key="41">
    <citation type="journal article" date="2001" name="J. Biol. Chem.">
        <title>Identification and topology of variant sequences within individual repeat domains of the human epithelial tumor mucin MUC1.</title>
        <authorList>
            <person name="Engelmann K."/>
            <person name="Baldus S.E."/>
            <person name="Hanisch F.-G."/>
        </authorList>
    </citation>
    <scope>POLYMORPHISM WITHIN THE REPEAT</scope>
</reference>
<reference key="42">
    <citation type="journal article" date="2001" name="J. Biol. Chem.">
        <title>The epidermal growth factor receptor regulates interaction of the human DF3/MUC1 carcinoma antigen with c-Src and beta-catenin.</title>
        <authorList>
            <person name="Li Y."/>
            <person name="Ren J."/>
            <person name="Yu W."/>
            <person name="Li Q."/>
            <person name="Kuwahara H."/>
            <person name="Yin L."/>
            <person name="Carraway K.L. III"/>
            <person name="Kufe D."/>
        </authorList>
    </citation>
    <scope>INTERACTION WITH EGFR</scope>
    <scope>PHOSPHORYLATION AT TYR-1229 BY EGFR</scope>
    <scope>MUTAGENESIS OF TYR-1191; TYR-1203; TYR-1209; TYR-1218 AND TYR-1229</scope>
</reference>
<reference key="43">
    <citation type="journal article" date="2002" name="J. Biol. Chem.">
        <title>Protein kinase C delta regulates function of the DF3/MUC1 carcinoma antigen in beta-catenin signaling.</title>
        <authorList>
            <person name="Ren J."/>
            <person name="Li Y."/>
            <person name="Kufe D."/>
        </authorList>
    </citation>
    <scope>PHOSPHORYLATION AT THR-1224</scope>
    <scope>INTERACTION WITH PRKCD</scope>
    <scope>FUNCTION</scope>
    <scope>MUTAGENESIS OF SER-1223; THR-1224 AND SER-1227</scope>
</reference>
<reference key="44">
    <citation type="journal article" date="2003" name="Biochem. Biophys. Res. Commun.">
        <title>Identification of four sites of stimulated tyrosine phosphorylation in the MUC1 cytoplasmic tail.</title>
        <authorList>
            <person name="Wang H."/>
            <person name="Lillehoj E.P."/>
            <person name="Kim K.C."/>
        </authorList>
    </citation>
    <scope>PHOSPHORYLATION AT TYR-1203; TYR-1212; TYR-1229 AND TYR-1243</scope>
</reference>
<reference key="45">
    <citation type="journal article" date="2003" name="Cancer Biol. Ther.">
        <title>DF3/MUC1 signaling in multiple myeloma cells is regulated by interleukin-7.</title>
        <authorList>
            <person name="Li Y."/>
            <person name="Chen W."/>
            <person name="Ren J."/>
            <person name="Yu W.H."/>
            <person name="Li Q."/>
            <person name="Yoshida K."/>
            <person name="Kufe D."/>
        </authorList>
    </citation>
    <scope>INTERACTION WITH LYN</scope>
    <scope>PHOSPHORYLATION</scope>
</reference>
<reference key="46">
    <citation type="journal article" date="2003" name="Cancer Biol. Ther.">
        <title>MUC1 cytoplasmic domain coactivates Wnt target gene transcription and confers transformation.</title>
        <authorList>
            <person name="Huang L."/>
            <person name="Ren J."/>
            <person name="Chen D."/>
            <person name="Li Y."/>
            <person name="Kharbanda S."/>
            <person name="Kufe D."/>
        </authorList>
    </citation>
    <scope>INTERACTION WITH CTNNB1</scope>
    <scope>FUNCTION</scope>
    <scope>MUTAGENESIS OF TYR-1229</scope>
</reference>
<reference key="47">
    <citation type="journal article" date="2003" name="J. Biol. Chem.">
        <title>Tumor necrosis factor-alpha converting enzyme/ADAM 17 mediates MUC1 shedding.</title>
        <authorList>
            <person name="Thathiah A."/>
            <person name="Blobel C.P."/>
            <person name="Carson D.D."/>
        </authorList>
    </citation>
    <scope>INTERACTION WITH ADAM17</scope>
    <scope>CLEAVAGE</scope>
</reference>
<reference key="48">
    <citation type="journal article" date="2003" name="J. Biol. Chem.">
        <title>Nuclear association of the cytoplasmic tail of MUC1 and beta-catenin.</title>
        <authorList>
            <person name="Wen Y."/>
            <person name="Caffrey T.C."/>
            <person name="Wheelock M.J."/>
            <person name="Johnson K.R."/>
            <person name="Hollingsworth M.A."/>
        </authorList>
    </citation>
    <scope>INTERACTION WITH CTNNB1</scope>
    <scope>SUBCELLULAR LOCATION</scope>
</reference>
<reference key="49">
    <citation type="journal article" date="2003" name="Mol. Cancer Res.">
        <title>Heregulin targets gamma-catenin to the nucleolus by a mechanism dependent on the DF3/MUC1 oncoprotein.</title>
        <authorList>
            <person name="Li Y."/>
            <person name="Yu W.-H."/>
            <person name="Ren J."/>
            <person name="Chen W."/>
            <person name="Huang L."/>
            <person name="Kharbanda S."/>
            <person name="Loda M."/>
            <person name="Kufe D."/>
        </authorList>
    </citation>
    <scope>INTERACTION WITH ERBB2; ERBB3 AND ERBB4</scope>
    <scope>SUBCELLULAR LOCATION</scope>
    <scope>MUTAGENESIS OF 1187-ARG--LYS-1189</scope>
</reference>
<reference key="50">
    <citation type="journal article" date="2004" name="J. Biol. Chem.">
        <title>MUC1 membrane trafficking is modulated by multiple interactions.</title>
        <authorList>
            <person name="Kinlough C.L."/>
            <person name="Poland P.A."/>
            <person name="Bruns J.B."/>
            <person name="Harkleroad K.L."/>
            <person name="Hughey R.P."/>
        </authorList>
    </citation>
    <scope>INTERACTION WITH AP1S2 AND GRB2</scope>
    <scope>SUBCELLULAR LOCATION</scope>
    <scope>MUTAGENESIS OF TYR-1191; TYR-1203; TYR-1229 AND TYR-1243</scope>
</reference>
<reference key="51">
    <citation type="journal article" date="2005" name="Cancer Cell">
        <title>Human MUC1 oncoprotein regulates p53-responsive gene transcription in the genotoxic stress response.</title>
        <authorList>
            <person name="Wei X."/>
            <person name="Xu H."/>
            <person name="Kufe D."/>
        </authorList>
    </citation>
    <scope>INTERACTION WITH TP53</scope>
    <scope>FUNCTION</scope>
</reference>
<reference key="52">
    <citation type="journal article" date="2005" name="Cancer Res.">
        <title>MUC1 oncoprotein blocks glycogen synthase kinase 3beta-mediated phosphorylation and degradation of beta-catenin.</title>
        <authorList>
            <person name="Huang L."/>
            <person name="Chen D."/>
            <person name="Liu D."/>
            <person name="Yin L."/>
            <person name="Kharbanda S."/>
            <person name="Kufe D."/>
        </authorList>
    </citation>
    <scope>INTERACTION WITH GSK3B</scope>
    <scope>PHOSPHORYLATION</scope>
    <scope>FUNCTION</scope>
</reference>
<reference key="53">
    <citation type="journal article" date="2005" name="J. Biol. Chem.">
        <authorList>
            <person name="Kinlough C.L."/>
            <person name="Poland P.A."/>
            <person name="Bruns J.B."/>
            <person name="Harkleroad K.L."/>
            <person name="Hughey R.P."/>
        </authorList>
    </citation>
    <scope>ERRATUM OF PUBMED:16288032</scope>
</reference>
<reference key="54">
    <citation type="journal article" date="2005" name="Glycobiology">
        <title>Transmembrane and secreted MUC1 probes show trafficking-dependent changes in O-glycan core profiles.</title>
        <authorList>
            <person name="Engelmann K."/>
            <person name="Kinlough C.L."/>
            <person name="Muller S."/>
            <person name="Razawi H."/>
            <person name="Baldus S.E."/>
            <person name="Hughey R.P."/>
            <person name="Hanisch F.-G."/>
        </authorList>
    </citation>
    <scope>STRUCTURE OF CARBOHYDRATES</scope>
    <scope>IDENTIFICATION BY MASS SPECTROMETRY</scope>
    <scope>SUBCELLULAR LOCATION</scope>
</reference>
<reference key="55">
    <citation type="journal article" date="2005" name="J. Leukoc. Biol.">
        <title>MUC1 (CD227) interacts with lck tyrosine kinase in Jurkat lymphoma cells and normal T cells.</title>
        <authorList>
            <person name="Mukherjee P."/>
            <person name="Tinder T.L."/>
            <person name="Basu G.D."/>
            <person name="Gendler S.J."/>
        </authorList>
    </citation>
    <scope>INTERACTION WITH LCK</scope>
    <scope>PHOSPHORYLATION</scope>
    <scope>FUNCTION</scope>
    <scope>TISSUE SPECIFICITY</scope>
</reference>
<reference key="56">
    <citation type="journal article" date="2006" name="J. Biol. Chem.">
        <title>Recycling of MUC1 is dependent on its palmitoylation.</title>
        <authorList>
            <person name="Kinlough C.L."/>
            <person name="McMahan R.J."/>
            <person name="Poland P.A."/>
            <person name="Bruns J.B."/>
            <person name="Harkleroad K.L."/>
            <person name="Stremple R.J."/>
            <person name="Kashlan O.B."/>
            <person name="Weixel K.M."/>
            <person name="Weisz O.A."/>
            <person name="Hughey R.P."/>
        </authorList>
    </citation>
    <scope>PALMITOYLATION AT CYS-1184 AND CYS-1186</scope>
    <scope>SUBCELLULAR LOCATION</scope>
    <scope>INTERACTION WITH AP1S1 AND AP1S2</scope>
    <scope>MUTAGENESIS OF CYS-1184; CYS-1186; TYR-1203 AND 1187-ARG--LYS-1189</scope>
</reference>
<reference key="57">
    <citation type="journal article" date="2006" name="Mol. Cell">
        <title>MUC1 oncoprotein stabilizes and activates estrogen receptor alpha.</title>
        <authorList>
            <person name="Wei X."/>
            <person name="Xu H."/>
            <person name="Kufe D."/>
        </authorList>
    </citation>
    <scope>INTERACTION WITH ESR1</scope>
</reference>
<reference key="58">
    <citation type="journal article" date="2007" name="Biochim. Biophys. Acta">
        <title>MUC1 inhibits cell proliferation by a beta-catenin-dependent mechanism.</title>
        <authorList>
            <person name="Lillehoj E.P."/>
            <person name="Lu W."/>
            <person name="Kiser T."/>
            <person name="Goldblum S.E."/>
            <person name="Kim K.C."/>
        </authorList>
    </citation>
    <scope>INTERACTION WITH CTNNB1</scope>
    <scope>SUBCELLULAR LOCATION</scope>
    <scope>FUNCTION</scope>
</reference>
<reference key="59">
    <citation type="journal article" date="2007" name="Cancer Res.">
        <title>Human mucin 1 oncoprotein represses transcription of the p53 tumor suppressor gene.</title>
        <authorList>
            <person name="Wei X."/>
            <person name="Xu H."/>
            <person name="Kufe D."/>
        </authorList>
    </citation>
    <scope>INTERACTION WITH KLF4</scope>
    <scope>FUNCTION</scope>
</reference>
<reference key="60">
    <citation type="journal article" date="2007" name="Cancer Res.">
        <title>Platelet-derived growth factor receptor beta-mediated phosphorylation of MUC1 enhances invasiveness in pancreatic adenocarcinoma cells.</title>
        <authorList>
            <person name="Singh P.K."/>
            <person name="Wen Y."/>
            <person name="Swanson B.J."/>
            <person name="Shanmugam K."/>
            <person name="Kazlauskas A."/>
            <person name="Cerny R.L."/>
            <person name="Gendler S.J."/>
            <person name="Hollingsworth M.A."/>
        </authorList>
    </citation>
    <scope>PHOSPHORYLATION AT TYR-1203; TYR-1218 AND TYR-1229</scope>
    <scope>MUTAGENESIS OF TYR-1203 AND TYR-1218</scope>
    <scope>SUBCELLULAR LOCATION</scope>
    <scope>IDENTIFICATION BY MASS SPECTROMETRY</scope>
</reference>
<reference key="61">
    <citation type="journal article" date="2007" name="Oncogene">
        <title>MUC1 is a novel regulator of ErbB1 receptor trafficking.</title>
        <authorList>
            <person name="Pochampalli M.R."/>
            <person name="el Bejjani R.M."/>
            <person name="Schroeder J.A."/>
        </authorList>
    </citation>
    <scope>INTERACTION WITH EGFR</scope>
    <scope>FUNCTION</scope>
</reference>
<reference key="62">
    <citation type="journal article" date="2010" name="Clin. Chim. Acta">
        <title>CA 15-3: uses and limitation as a biomarker for breast cancer.</title>
        <authorList>
            <person name="Duffy M.J."/>
            <person name="Evoy D."/>
            <person name="McDermott E.W."/>
        </authorList>
    </citation>
    <scope>MARKER IN BREAST CANCER</scope>
</reference>
<reference key="63">
    <citation type="journal article" date="2013" name="J. Proteome Res.">
        <title>Toward a comprehensive characterization of a human cancer cell phosphoproteome.</title>
        <authorList>
            <person name="Zhou H."/>
            <person name="Di Palma S."/>
            <person name="Preisinger C."/>
            <person name="Peng M."/>
            <person name="Polat A.N."/>
            <person name="Heck A.J."/>
            <person name="Mohammed S."/>
        </authorList>
    </citation>
    <scope>PHOSPHORYLATION [LARGE SCALE ANALYSIS] AT SER-1227</scope>
    <scope>IDENTIFICATION BY MASS SPECTROMETRY [LARGE SCALE ANALYSIS]</scope>
    <source>
        <tissue>Cervix carcinoma</tissue>
        <tissue>Erythroleukemia</tissue>
    </source>
</reference>
<reference key="64">
    <citation type="journal article" date="2013" name="Nat. Genet.">
        <title>Mutations causing medullary cystic kidney disease type 1 lie in a large VNTR in MUC1 missed by massively parallel sequencing.</title>
        <authorList>
            <person name="Kirby A."/>
            <person name="Gnirke A."/>
            <person name="Jaffe D.B."/>
            <person name="Baresova V."/>
            <person name="Pochet N."/>
            <person name="Blumenstiel B."/>
            <person name="Ye C."/>
            <person name="Aird D."/>
            <person name="Stevens C."/>
            <person name="Robinson J.T."/>
            <person name="Cabili M.N."/>
            <person name="Gat-Viks I."/>
            <person name="Kelliher E."/>
            <person name="Daza R."/>
            <person name="DeFelice M."/>
            <person name="Hulkova H."/>
            <person name="Sovova J."/>
            <person name="Vylet'al P."/>
            <person name="Antignac C."/>
            <person name="Guttman M."/>
            <person name="Handsaker R.E."/>
            <person name="Perrin D."/>
            <person name="Steelman S."/>
            <person name="Sigurdsson S."/>
            <person name="Scheinman S.J."/>
            <person name="Sougnez C."/>
            <person name="Cibulskis K."/>
            <person name="Parkin M."/>
            <person name="Green T."/>
            <person name="Rossin E."/>
            <person name="Zody M.C."/>
            <person name="Xavier R.J."/>
            <person name="Pollak M.R."/>
            <person name="Alper S.L."/>
            <person name="Lindblad-Toh K."/>
            <person name="Gabriel S."/>
            <person name="Hart P.S."/>
            <person name="Regev A."/>
            <person name="Nusbaum C."/>
            <person name="Kmoch S."/>
            <person name="Bleyer A.J."/>
            <person name="Lander E.S."/>
            <person name="Daly M.J."/>
        </authorList>
    </citation>
    <scope>INVOLVEMENT IN ADTKD2</scope>
</reference>
<reference key="65">
    <citation type="journal article" date="2006" name="Glycobiology">
        <title>N-glycosylation of the MUC1 mucin in epithelial cells and secretions.</title>
        <authorList>
            <person name="Parry S."/>
            <person name="Hanisch F.G."/>
            <person name="Leir S.H."/>
            <person name="Sutton-Smith M."/>
            <person name="Morris H.R."/>
            <person name="Dell A."/>
            <person name="Harris A."/>
        </authorList>
    </citation>
    <scope>STRUCTURE BY NMR OF 1041-1097 AND 1098-1152 OF WILD TYPE AND MUTANT ALA-1098</scope>
    <scope>IDENTIFICATION BY MASS SPECTROMETRY</scope>
    <scope>STRUCTURE OF CARBOHYDRATES</scope>
    <scope>AUTOCATALYTIC CLEAVAGE</scope>
</reference>
<reference evidence="63" key="66">
    <citation type="journal article" date="2022" name="Nat. Commun.">
        <title>Structural basis for the synthesis of the core 1 structure by C1GalT1.</title>
        <authorList>
            <person name="Gonzalez-Ramirez A.M."/>
            <person name="Grosso A.S."/>
            <person name="Yang Z."/>
            <person name="Companon I."/>
            <person name="Coelho H."/>
            <person name="Narimatsu Y."/>
            <person name="Clausen H."/>
            <person name="Marcelo F."/>
            <person name="Corzana F."/>
            <person name="Hurtado-Guerrero R."/>
        </authorList>
    </citation>
    <scope>X-RAY CRYSTALLOGRAPHY (2.40 ANGSTROMS) OF 921-926 IN COMPLEX WITH DROSOPHILA C1GALTA; MN(2+) AND UDP</scope>
</reference>
<evidence type="ECO:0000255" key="1"/>
<evidence type="ECO:0000255" key="2">
    <source>
        <dbReference type="PROSITE-ProRule" id="PRU00188"/>
    </source>
</evidence>
<evidence type="ECO:0000256" key="3">
    <source>
        <dbReference type="SAM" id="MobiDB-lite"/>
    </source>
</evidence>
<evidence type="ECO:0000269" key="4">
    <source>
    </source>
</evidence>
<evidence type="ECO:0000269" key="5">
    <source>
    </source>
</evidence>
<evidence type="ECO:0000269" key="6">
    <source>
    </source>
</evidence>
<evidence type="ECO:0000269" key="7">
    <source>
    </source>
</evidence>
<evidence type="ECO:0000269" key="8">
    <source>
    </source>
</evidence>
<evidence type="ECO:0000269" key="9">
    <source>
    </source>
</evidence>
<evidence type="ECO:0000269" key="10">
    <source>
    </source>
</evidence>
<evidence type="ECO:0000269" key="11">
    <source>
    </source>
</evidence>
<evidence type="ECO:0000269" key="12">
    <source>
    </source>
</evidence>
<evidence type="ECO:0000269" key="13">
    <source>
    </source>
</evidence>
<evidence type="ECO:0000269" key="14">
    <source>
    </source>
</evidence>
<evidence type="ECO:0000269" key="15">
    <source>
    </source>
</evidence>
<evidence type="ECO:0000269" key="16">
    <source>
    </source>
</evidence>
<evidence type="ECO:0000269" key="17">
    <source>
    </source>
</evidence>
<evidence type="ECO:0000269" key="18">
    <source>
    </source>
</evidence>
<evidence type="ECO:0000269" key="19">
    <source>
    </source>
</evidence>
<evidence type="ECO:0000269" key="20">
    <source>
    </source>
</evidence>
<evidence type="ECO:0000269" key="21">
    <source>
    </source>
</evidence>
<evidence type="ECO:0000269" key="22">
    <source>
    </source>
</evidence>
<evidence type="ECO:0000269" key="23">
    <source>
    </source>
</evidence>
<evidence type="ECO:0000269" key="24">
    <source>
    </source>
</evidence>
<evidence type="ECO:0000269" key="25">
    <source>
    </source>
</evidence>
<evidence type="ECO:0000269" key="26">
    <source>
    </source>
</evidence>
<evidence type="ECO:0000269" key="27">
    <source>
    </source>
</evidence>
<evidence type="ECO:0000269" key="28">
    <source>
    </source>
</evidence>
<evidence type="ECO:0000269" key="29">
    <source>
    </source>
</evidence>
<evidence type="ECO:0000269" key="30">
    <source>
    </source>
</evidence>
<evidence type="ECO:0000269" key="31">
    <source>
    </source>
</evidence>
<evidence type="ECO:0000269" key="32">
    <source>
    </source>
</evidence>
<evidence type="ECO:0000269" key="33">
    <source>
    </source>
</evidence>
<evidence type="ECO:0000269" key="34">
    <source>
    </source>
</evidence>
<evidence type="ECO:0000269" key="35">
    <source>
    </source>
</evidence>
<evidence type="ECO:0000269" key="36">
    <source>
    </source>
</evidence>
<evidence type="ECO:0000269" key="37">
    <source>
    </source>
</evidence>
<evidence type="ECO:0000269" key="38">
    <source>
    </source>
</evidence>
<evidence type="ECO:0000269" key="39">
    <source>
    </source>
</evidence>
<evidence type="ECO:0000269" key="40">
    <source>
    </source>
</evidence>
<evidence type="ECO:0000269" key="41">
    <source>
    </source>
</evidence>
<evidence type="ECO:0000269" key="42">
    <source>
    </source>
</evidence>
<evidence type="ECO:0000269" key="43">
    <source>
    </source>
</evidence>
<evidence type="ECO:0000269" key="44">
    <source ref="17"/>
</evidence>
<evidence type="ECO:0000303" key="45">
    <source>
    </source>
</evidence>
<evidence type="ECO:0000303" key="46">
    <source>
    </source>
</evidence>
<evidence type="ECO:0000303" key="47">
    <source>
    </source>
</evidence>
<evidence type="ECO:0000303" key="48">
    <source>
    </source>
</evidence>
<evidence type="ECO:0000303" key="49">
    <source>
    </source>
</evidence>
<evidence type="ECO:0000303" key="50">
    <source>
    </source>
</evidence>
<evidence type="ECO:0000303" key="51">
    <source>
    </source>
</evidence>
<evidence type="ECO:0000303" key="52">
    <source>
    </source>
</evidence>
<evidence type="ECO:0000303" key="53">
    <source>
    </source>
</evidence>
<evidence type="ECO:0000303" key="54">
    <source>
    </source>
</evidence>
<evidence type="ECO:0000303" key="55">
    <source ref="12"/>
</evidence>
<evidence type="ECO:0000303" key="56">
    <source ref="14"/>
</evidence>
<evidence type="ECO:0000303" key="57">
    <source ref="15"/>
</evidence>
<evidence type="ECO:0000303" key="58">
    <source ref="16"/>
</evidence>
<evidence type="ECO:0000303" key="59">
    <source ref="25"/>
</evidence>
<evidence type="ECO:0000305" key="60"/>
<evidence type="ECO:0000305" key="61">
    <source>
    </source>
</evidence>
<evidence type="ECO:0000305" key="62">
    <source>
    </source>
</evidence>
<evidence type="ECO:0007744" key="63">
    <source>
        <dbReference type="PDB" id="7Q4I"/>
    </source>
</evidence>
<evidence type="ECO:0007744" key="64">
    <source>
    </source>
</evidence>
<evidence type="ECO:0007829" key="65">
    <source>
        <dbReference type="PDB" id="2ACM"/>
    </source>
</evidence>